<organism>
    <name type="scientific">Homo sapiens</name>
    <name type="common">Human</name>
    <dbReference type="NCBI Taxonomy" id="9606"/>
    <lineage>
        <taxon>Eukaryota</taxon>
        <taxon>Metazoa</taxon>
        <taxon>Chordata</taxon>
        <taxon>Craniata</taxon>
        <taxon>Vertebrata</taxon>
        <taxon>Euteleostomi</taxon>
        <taxon>Mammalia</taxon>
        <taxon>Eutheria</taxon>
        <taxon>Euarchontoglires</taxon>
        <taxon>Primates</taxon>
        <taxon>Haplorrhini</taxon>
        <taxon>Catarrhini</taxon>
        <taxon>Hominidae</taxon>
        <taxon>Homo</taxon>
    </lineage>
</organism>
<sequence length="269" mass="28526">MASEFKKKLFWRAVVAEFLATTLFVFISIGSALGFKYPVGNNQTAVQDNVKVSLAFGLSIATLAQSVGHISGAHLNPAVTLGLLLSCQISIFRALMYIIAQCVGAIVATAILSGITSSLTGNSLGRNDLADGVNSGQGLGIEIIGTLQLVLCVLATTDRRRRDLGGSAPLAIGLSVALGHLLAIDYTGCGINPARSFGSAVITHNFSNHWIFWVGPFIGGALAVLIYDFILAPRSSDLTDRVKVWTSGQVEEYDLDADDINSRVEMKPK</sequence>
<reference key="1">
    <citation type="journal article" date="1991" name="Proc. Natl. Acad. Sci. U.S.A.">
        <title>Isolation of the cDNA for erythrocyte integral membrane protein of 28 kilodaltons: member of an ancient channel family.</title>
        <authorList>
            <person name="Preston G.M."/>
            <person name="Agre P."/>
        </authorList>
    </citation>
    <scope>NUCLEOTIDE SEQUENCE [MRNA] (ISOFORM 1)</scope>
    <scope>PARTIAL PROTEIN SEQUENCE</scope>
</reference>
<reference key="2">
    <citation type="journal article" date="1993" name="J. Biol. Chem.">
        <title>The human aquaporin-CHIP gene. Structure, organization, and chromosomal localization.</title>
        <authorList>
            <person name="Moon C."/>
            <person name="Preston G.M."/>
            <person name="Griffin C.A."/>
            <person name="Jabs E.W."/>
            <person name="Agre P."/>
        </authorList>
    </citation>
    <scope>NUCLEOTIDE SEQUENCE [GENOMIC DNA]</scope>
</reference>
<reference key="3">
    <citation type="journal article" date="1996" name="Biochim. Biophys. Acta">
        <title>Characterization of the 3' UTR sequence encoded by the AQP-1 gene in human retinal pigment epithelium.</title>
        <authorList>
            <person name="Ruiz A.C."/>
            <person name="Bok D."/>
        </authorList>
    </citation>
    <scope>NUCLEOTIDE SEQUENCE [MRNA] (ISOFORM 1)</scope>
    <source>
        <tissue>Retinal pigment epithelium</tissue>
    </source>
</reference>
<reference key="4">
    <citation type="journal article" date="1994" name="Biochem. Mol. Biol. Int.">
        <title>The water channel gene in human uterus.</title>
        <authorList>
            <person name="Li X."/>
            <person name="Yu H."/>
            <person name="Koide S.S."/>
        </authorList>
    </citation>
    <scope>NUCLEOTIDE SEQUENCE [MRNA] (ISOFORM 1)</scope>
    <source>
        <tissue>Uterus</tissue>
    </source>
</reference>
<reference key="5">
    <citation type="journal article" date="2004" name="Nat. Genet.">
        <title>Complete sequencing and characterization of 21,243 full-length human cDNAs.</title>
        <authorList>
            <person name="Ota T."/>
            <person name="Suzuki Y."/>
            <person name="Nishikawa T."/>
            <person name="Otsuki T."/>
            <person name="Sugiyama T."/>
            <person name="Irie R."/>
            <person name="Wakamatsu A."/>
            <person name="Hayashi K."/>
            <person name="Sato H."/>
            <person name="Nagai K."/>
            <person name="Kimura K."/>
            <person name="Makita H."/>
            <person name="Sekine M."/>
            <person name="Obayashi M."/>
            <person name="Nishi T."/>
            <person name="Shibahara T."/>
            <person name="Tanaka T."/>
            <person name="Ishii S."/>
            <person name="Yamamoto J."/>
            <person name="Saito K."/>
            <person name="Kawai Y."/>
            <person name="Isono Y."/>
            <person name="Nakamura Y."/>
            <person name="Nagahari K."/>
            <person name="Murakami K."/>
            <person name="Yasuda T."/>
            <person name="Iwayanagi T."/>
            <person name="Wagatsuma M."/>
            <person name="Shiratori A."/>
            <person name="Sudo H."/>
            <person name="Hosoiri T."/>
            <person name="Kaku Y."/>
            <person name="Kodaira H."/>
            <person name="Kondo H."/>
            <person name="Sugawara M."/>
            <person name="Takahashi M."/>
            <person name="Kanda K."/>
            <person name="Yokoi T."/>
            <person name="Furuya T."/>
            <person name="Kikkawa E."/>
            <person name="Omura Y."/>
            <person name="Abe K."/>
            <person name="Kamihara K."/>
            <person name="Katsuta N."/>
            <person name="Sato K."/>
            <person name="Tanikawa M."/>
            <person name="Yamazaki M."/>
            <person name="Ninomiya K."/>
            <person name="Ishibashi T."/>
            <person name="Yamashita H."/>
            <person name="Murakawa K."/>
            <person name="Fujimori K."/>
            <person name="Tanai H."/>
            <person name="Kimata M."/>
            <person name="Watanabe M."/>
            <person name="Hiraoka S."/>
            <person name="Chiba Y."/>
            <person name="Ishida S."/>
            <person name="Ono Y."/>
            <person name="Takiguchi S."/>
            <person name="Watanabe S."/>
            <person name="Yosida M."/>
            <person name="Hotuta T."/>
            <person name="Kusano J."/>
            <person name="Kanehori K."/>
            <person name="Takahashi-Fujii A."/>
            <person name="Hara H."/>
            <person name="Tanase T.-O."/>
            <person name="Nomura Y."/>
            <person name="Togiya S."/>
            <person name="Komai F."/>
            <person name="Hara R."/>
            <person name="Takeuchi K."/>
            <person name="Arita M."/>
            <person name="Imose N."/>
            <person name="Musashino K."/>
            <person name="Yuuki H."/>
            <person name="Oshima A."/>
            <person name="Sasaki N."/>
            <person name="Aotsuka S."/>
            <person name="Yoshikawa Y."/>
            <person name="Matsunawa H."/>
            <person name="Ichihara T."/>
            <person name="Shiohata N."/>
            <person name="Sano S."/>
            <person name="Moriya S."/>
            <person name="Momiyama H."/>
            <person name="Satoh N."/>
            <person name="Takami S."/>
            <person name="Terashima Y."/>
            <person name="Suzuki O."/>
            <person name="Nakagawa S."/>
            <person name="Senoh A."/>
            <person name="Mizoguchi H."/>
            <person name="Goto Y."/>
            <person name="Shimizu F."/>
            <person name="Wakebe H."/>
            <person name="Hishigaki H."/>
            <person name="Watanabe T."/>
            <person name="Sugiyama A."/>
            <person name="Takemoto M."/>
            <person name="Kawakami B."/>
            <person name="Yamazaki M."/>
            <person name="Watanabe K."/>
            <person name="Kumagai A."/>
            <person name="Itakura S."/>
            <person name="Fukuzumi Y."/>
            <person name="Fujimori Y."/>
            <person name="Komiyama M."/>
            <person name="Tashiro H."/>
            <person name="Tanigami A."/>
            <person name="Fujiwara T."/>
            <person name="Ono T."/>
            <person name="Yamada K."/>
            <person name="Fujii Y."/>
            <person name="Ozaki K."/>
            <person name="Hirao M."/>
            <person name="Ohmori Y."/>
            <person name="Kawabata A."/>
            <person name="Hikiji T."/>
            <person name="Kobatake N."/>
            <person name="Inagaki H."/>
            <person name="Ikema Y."/>
            <person name="Okamoto S."/>
            <person name="Okitani R."/>
            <person name="Kawakami T."/>
            <person name="Noguchi S."/>
            <person name="Itoh T."/>
            <person name="Shigeta K."/>
            <person name="Senba T."/>
            <person name="Matsumura K."/>
            <person name="Nakajima Y."/>
            <person name="Mizuno T."/>
            <person name="Morinaga M."/>
            <person name="Sasaki M."/>
            <person name="Togashi T."/>
            <person name="Oyama M."/>
            <person name="Hata H."/>
            <person name="Watanabe M."/>
            <person name="Komatsu T."/>
            <person name="Mizushima-Sugano J."/>
            <person name="Satoh T."/>
            <person name="Shirai Y."/>
            <person name="Takahashi Y."/>
            <person name="Nakagawa K."/>
            <person name="Okumura K."/>
            <person name="Nagase T."/>
            <person name="Nomura N."/>
            <person name="Kikuchi H."/>
            <person name="Masuho Y."/>
            <person name="Yamashita R."/>
            <person name="Nakai K."/>
            <person name="Yada T."/>
            <person name="Nakamura Y."/>
            <person name="Ohara O."/>
            <person name="Isogai T."/>
            <person name="Sugano S."/>
        </authorList>
    </citation>
    <scope>NUCLEOTIDE SEQUENCE [LARGE SCALE MRNA] (ISOFORM 2)</scope>
    <source>
        <tissue>Mesangial cell</tissue>
    </source>
</reference>
<reference key="6">
    <citation type="submission" date="2005-03" db="EMBL/GenBank/DDBJ databases">
        <authorList>
            <consortium name="SeattleSNPs variation discovery resource"/>
        </authorList>
    </citation>
    <scope>NUCLEOTIDE SEQUENCE [GENOMIC DNA]</scope>
    <scope>VARIANTS VAL-45 AND ASP-165</scope>
</reference>
<reference key="7">
    <citation type="journal article" date="2008" name="Nat. Methods">
        <title>Human protein factory for converting the transcriptome into an in vitro-expressed proteome.</title>
        <authorList>
            <person name="Goshima N."/>
            <person name="Kawamura Y."/>
            <person name="Fukumoto A."/>
            <person name="Miura A."/>
            <person name="Honma R."/>
            <person name="Satoh R."/>
            <person name="Wakamatsu A."/>
            <person name="Yamamoto J."/>
            <person name="Kimura K."/>
            <person name="Nishikawa T."/>
            <person name="Andoh T."/>
            <person name="Iida Y."/>
            <person name="Ishikawa K."/>
            <person name="Ito E."/>
            <person name="Kagawa N."/>
            <person name="Kaminaga C."/>
            <person name="Kanehori K."/>
            <person name="Kawakami B."/>
            <person name="Kenmochi K."/>
            <person name="Kimura R."/>
            <person name="Kobayashi M."/>
            <person name="Kuroita T."/>
            <person name="Kuwayama H."/>
            <person name="Maruyama Y."/>
            <person name="Matsuo K."/>
            <person name="Minami K."/>
            <person name="Mitsubori M."/>
            <person name="Mori M."/>
            <person name="Morishita R."/>
            <person name="Murase A."/>
            <person name="Nishikawa A."/>
            <person name="Nishikawa S."/>
            <person name="Okamoto T."/>
            <person name="Sakagami N."/>
            <person name="Sakamoto Y."/>
            <person name="Sasaki Y."/>
            <person name="Seki T."/>
            <person name="Sono S."/>
            <person name="Sugiyama A."/>
            <person name="Sumiya T."/>
            <person name="Takayama T."/>
            <person name="Takayama Y."/>
            <person name="Takeda H."/>
            <person name="Togashi T."/>
            <person name="Yahata K."/>
            <person name="Yamada H."/>
            <person name="Yanagisawa Y."/>
            <person name="Endo Y."/>
            <person name="Imamoto F."/>
            <person name="Kisu Y."/>
            <person name="Tanaka S."/>
            <person name="Isogai T."/>
            <person name="Imai J."/>
            <person name="Watanabe S."/>
            <person name="Nomura N."/>
        </authorList>
    </citation>
    <scope>NUCLEOTIDE SEQUENCE [LARGE SCALE MRNA] (ISOFORM 1)</scope>
</reference>
<reference key="8">
    <citation type="journal article" date="2003" name="Nature">
        <title>The DNA sequence of human chromosome 7.</title>
        <authorList>
            <person name="Hillier L.W."/>
            <person name="Fulton R.S."/>
            <person name="Fulton L.A."/>
            <person name="Graves T.A."/>
            <person name="Pepin K.H."/>
            <person name="Wagner-McPherson C."/>
            <person name="Layman D."/>
            <person name="Maas J."/>
            <person name="Jaeger S."/>
            <person name="Walker R."/>
            <person name="Wylie K."/>
            <person name="Sekhon M."/>
            <person name="Becker M.C."/>
            <person name="O'Laughlin M.D."/>
            <person name="Schaller M.E."/>
            <person name="Fewell G.A."/>
            <person name="Delehaunty K.D."/>
            <person name="Miner T.L."/>
            <person name="Nash W.E."/>
            <person name="Cordes M."/>
            <person name="Du H."/>
            <person name="Sun H."/>
            <person name="Edwards J."/>
            <person name="Bradshaw-Cordum H."/>
            <person name="Ali J."/>
            <person name="Andrews S."/>
            <person name="Isak A."/>
            <person name="Vanbrunt A."/>
            <person name="Nguyen C."/>
            <person name="Du F."/>
            <person name="Lamar B."/>
            <person name="Courtney L."/>
            <person name="Kalicki J."/>
            <person name="Ozersky P."/>
            <person name="Bielicki L."/>
            <person name="Scott K."/>
            <person name="Holmes A."/>
            <person name="Harkins R."/>
            <person name="Harris A."/>
            <person name="Strong C.M."/>
            <person name="Hou S."/>
            <person name="Tomlinson C."/>
            <person name="Dauphin-Kohlberg S."/>
            <person name="Kozlowicz-Reilly A."/>
            <person name="Leonard S."/>
            <person name="Rohlfing T."/>
            <person name="Rock S.M."/>
            <person name="Tin-Wollam A.-M."/>
            <person name="Abbott A."/>
            <person name="Minx P."/>
            <person name="Maupin R."/>
            <person name="Strowmatt C."/>
            <person name="Latreille P."/>
            <person name="Miller N."/>
            <person name="Johnson D."/>
            <person name="Murray J."/>
            <person name="Woessner J.P."/>
            <person name="Wendl M.C."/>
            <person name="Yang S.-P."/>
            <person name="Schultz B.R."/>
            <person name="Wallis J.W."/>
            <person name="Spieth J."/>
            <person name="Bieri T.A."/>
            <person name="Nelson J.O."/>
            <person name="Berkowicz N."/>
            <person name="Wohldmann P.E."/>
            <person name="Cook L.L."/>
            <person name="Hickenbotham M.T."/>
            <person name="Eldred J."/>
            <person name="Williams D."/>
            <person name="Bedell J.A."/>
            <person name="Mardis E.R."/>
            <person name="Clifton S.W."/>
            <person name="Chissoe S.L."/>
            <person name="Marra M.A."/>
            <person name="Raymond C."/>
            <person name="Haugen E."/>
            <person name="Gillett W."/>
            <person name="Zhou Y."/>
            <person name="James R."/>
            <person name="Phelps K."/>
            <person name="Iadanoto S."/>
            <person name="Bubb K."/>
            <person name="Simms E."/>
            <person name="Levy R."/>
            <person name="Clendenning J."/>
            <person name="Kaul R."/>
            <person name="Kent W.J."/>
            <person name="Furey T.S."/>
            <person name="Baertsch R.A."/>
            <person name="Brent M.R."/>
            <person name="Keibler E."/>
            <person name="Flicek P."/>
            <person name="Bork P."/>
            <person name="Suyama M."/>
            <person name="Bailey J.A."/>
            <person name="Portnoy M.E."/>
            <person name="Torrents D."/>
            <person name="Chinwalla A.T."/>
            <person name="Gish W.R."/>
            <person name="Eddy S.R."/>
            <person name="McPherson J.D."/>
            <person name="Olson M.V."/>
            <person name="Eichler E.E."/>
            <person name="Green E.D."/>
            <person name="Waterston R.H."/>
            <person name="Wilson R.K."/>
        </authorList>
    </citation>
    <scope>NUCLEOTIDE SEQUENCE [LARGE SCALE GENOMIC DNA]</scope>
</reference>
<reference key="9">
    <citation type="submission" date="2005-07" db="EMBL/GenBank/DDBJ databases">
        <authorList>
            <person name="Mural R.J."/>
            <person name="Istrail S."/>
            <person name="Sutton G.G."/>
            <person name="Florea L."/>
            <person name="Halpern A.L."/>
            <person name="Mobarry C.M."/>
            <person name="Lippert R."/>
            <person name="Walenz B."/>
            <person name="Shatkay H."/>
            <person name="Dew I."/>
            <person name="Miller J.R."/>
            <person name="Flanigan M.J."/>
            <person name="Edwards N.J."/>
            <person name="Bolanos R."/>
            <person name="Fasulo D."/>
            <person name="Halldorsson B.V."/>
            <person name="Hannenhalli S."/>
            <person name="Turner R."/>
            <person name="Yooseph S."/>
            <person name="Lu F."/>
            <person name="Nusskern D.R."/>
            <person name="Shue B.C."/>
            <person name="Zheng X.H."/>
            <person name="Zhong F."/>
            <person name="Delcher A.L."/>
            <person name="Huson D.H."/>
            <person name="Kravitz S.A."/>
            <person name="Mouchard L."/>
            <person name="Reinert K."/>
            <person name="Remington K.A."/>
            <person name="Clark A.G."/>
            <person name="Waterman M.S."/>
            <person name="Eichler E.E."/>
            <person name="Adams M.D."/>
            <person name="Hunkapiller M.W."/>
            <person name="Myers E.W."/>
            <person name="Venter J.C."/>
        </authorList>
    </citation>
    <scope>NUCLEOTIDE SEQUENCE [LARGE SCALE GENOMIC DNA]</scope>
</reference>
<reference key="10">
    <citation type="journal article" date="2004" name="Genome Res.">
        <title>The status, quality, and expansion of the NIH full-length cDNA project: the Mammalian Gene Collection (MGC).</title>
        <authorList>
            <consortium name="The MGC Project Team"/>
        </authorList>
    </citation>
    <scope>NUCLEOTIDE SEQUENCE [LARGE SCALE MRNA] (ISOFORM 1)</scope>
    <source>
        <tissue>Brain</tissue>
    </source>
</reference>
<reference key="11">
    <citation type="submission" date="2002-02" db="EMBL/GenBank/DDBJ databases">
        <title>Human chondrocytes in situ express aquaporin water channels: changes in AQP1 abundance in pathologies of articular cartilage.</title>
        <authorList>
            <person name="Trujillo E."/>
            <person name="Gonzalez T."/>
            <person name="Martin-Vasallo P."/>
            <person name="Marples D."/>
            <person name="Mobasheri A."/>
        </authorList>
    </citation>
    <scope>NUCLEOTIDE SEQUENCE [GENOMIC DNA] OF 5-269</scope>
    <source>
        <tissue>Articular cartilage</tissue>
    </source>
</reference>
<reference key="12">
    <citation type="journal article" date="1991" name="J. Biol. Chem.">
        <title>Erythrocyte Mr 28,000 transmembrane protein exists as a multisubunit oligomer similar to channel proteins.</title>
        <authorList>
            <person name="Smith B.L."/>
            <person name="Agre P."/>
        </authorList>
    </citation>
    <scope>PROTEIN SEQUENCE OF 2-36</scope>
</reference>
<reference key="13">
    <citation type="journal article" date="1992" name="Science">
        <title>Appearance of water channels in Xenopus oocytes expressing red cell CHIP28 protein.</title>
        <authorList>
            <person name="Preston G.M."/>
            <person name="Carroll T.P."/>
            <person name="Guggino W.B."/>
            <person name="Agre P."/>
        </authorList>
    </citation>
    <scope>FUNCTION</scope>
</reference>
<reference key="14">
    <citation type="journal article" date="1993" name="J. Biol. Chem.">
        <title>The mercury-sensitive residue at cysteine 189 in the CHIP28 water channel.</title>
        <authorList>
            <person name="Preston G.M."/>
            <person name="Jung J.S."/>
            <person name="Guggino W.B."/>
            <person name="Agre P."/>
        </authorList>
    </citation>
    <scope>ACTIVITY REGULATION</scope>
</reference>
<reference key="15">
    <citation type="journal article" date="1994" name="J. Biol. Chem.">
        <title>Membrane topology of aquaporin CHIP. Analysis of functional epitope-scanning mutants by vectorial proteolysis.</title>
        <authorList>
            <person name="Preston G.M."/>
            <person name="Jung J.S."/>
            <person name="Guggino W.B."/>
            <person name="Agre P."/>
        </authorList>
    </citation>
    <scope>TOPOLOGY</scope>
</reference>
<reference key="16">
    <citation type="journal article" date="1996" name="Pflugers Arch.">
        <title>Glycerol permeability of mutant aquaporin 1 and other AQP-MIP proteins: inhibition studies.</title>
        <authorList>
            <person name="Abrami L."/>
            <person name="Berthonaud V."/>
            <person name="Deen P.M."/>
            <person name="Rousselet G."/>
            <person name="Tacnet F."/>
            <person name="Ripoche P."/>
        </authorList>
    </citation>
    <scope>FUNCTION</scope>
    <scope>TRANSPORTER ACTIVITY</scope>
    <scope>ACTIVITY REGULATION</scope>
    <scope>MUTAGENESIS OF HIS-180; CYS-189 AND HIS-209</scope>
</reference>
<reference key="17">
    <citation type="journal article" date="1996" name="Science">
        <title>Forskolin stimulation of water and cation permeability in aquaporin 1 water channels.</title>
        <authorList>
            <person name="Yool A.J."/>
            <person name="Stamer W.D."/>
            <person name="Regan J.W."/>
        </authorList>
    </citation>
    <scope>FUNCTION</scope>
    <scope>TRANSPORTER ACTIVITY</scope>
</reference>
<reference key="18">
    <citation type="journal article" date="2006" name="FASEB J.">
        <title>Evidence that aquaporin 1 is a major pathway for CO2 transport across the human erythrocyte membrane.</title>
        <authorList>
            <person name="Endeward V."/>
            <person name="Musa-Aziz R."/>
            <person name="Cooper G.J."/>
            <person name="Chen L.M."/>
            <person name="Pelletier M.F."/>
            <person name="Virkki L.V."/>
            <person name="Supuran C.T."/>
            <person name="King L.S."/>
            <person name="Boron W.F."/>
            <person name="Gros G."/>
        </authorList>
    </citation>
    <scope>FUNCTION</scope>
    <scope>TRANSPORTER ACTIVITY</scope>
</reference>
<reference key="19">
    <citation type="journal article" date="2006" name="Hypertension">
        <title>Aquaporin-1 transports NO across cell membranes.</title>
        <authorList>
            <person name="Herrera M."/>
            <person name="Hong N.J."/>
            <person name="Garvin J.L."/>
        </authorList>
    </citation>
    <scope>FUNCTION</scope>
    <scope>TRANSPORTER ACTIVITY</scope>
</reference>
<reference key="20">
    <citation type="journal article" date="2009" name="Proc. Natl. Acad. Sci. U.S.A.">
        <title>Relative CO2/NH3 selectivities of AQP1, AQP4, AQP5, AmtB, and RhAG.</title>
        <authorList>
            <person name="Musa-Aziz R."/>
            <person name="Chen L.M."/>
            <person name="Pelletier M.F."/>
            <person name="Boron W.F."/>
        </authorList>
    </citation>
    <scope>FUNCTION</scope>
    <scope>TRANSPORTER ACTIVITY</scope>
</reference>
<reference key="21">
    <citation type="journal article" date="2013" name="Biochim. Biophys. Acta">
        <title>Stomatin interacts with GLUT1/SLC2A1, band 3/SLC4A1, and aquaporin-1 in human erythrocyte membrane domains.</title>
        <authorList>
            <person name="Rungaldier S."/>
            <person name="Oberwagner W."/>
            <person name="Salzer U."/>
            <person name="Csaszar E."/>
            <person name="Prohaska R."/>
        </authorList>
    </citation>
    <scope>SUBCELLULAR LOCATION</scope>
    <scope>TISSUE SPECIFICITY</scope>
    <scope>IDENTIFICATION IN A COMPLEX WITH STOM</scope>
    <scope>SUBUNIT</scope>
</reference>
<reference key="22">
    <citation type="journal article" date="2020" name="Sci. Transl. Med.">
        <title>Inhibition of aquaporin-1 prevents myocardial remodeling by blocking the transmembrane transport of hydrogen peroxide.</title>
        <authorList>
            <person name="Montiel V."/>
            <person name="Bella R."/>
            <person name="Michel L.Y.M."/>
            <person name="Esfahani H."/>
            <person name="De Mulder D."/>
            <person name="Robinson E.L."/>
            <person name="Deglasse J.P."/>
            <person name="Tiburcy M."/>
            <person name="Chow P.H."/>
            <person name="Jonas J.C."/>
            <person name="Gilon P."/>
            <person name="Steinhorn B."/>
            <person name="Michel T."/>
            <person name="Beauloye C."/>
            <person name="Bertrand L."/>
            <person name="Farah C."/>
            <person name="Dei Zotti F."/>
            <person name="Debaix H."/>
            <person name="Bouzin C."/>
            <person name="Brusa D."/>
            <person name="Horman S."/>
            <person name="Vanoverschelde J.L."/>
            <person name="Bergmann O."/>
            <person name="Gilis D."/>
            <person name="Rooman M."/>
            <person name="Ghigo A."/>
            <person name="Geninatti-Crich S."/>
            <person name="Yool A."/>
            <person name="Zimmermann W.H."/>
            <person name="Roderick H.L."/>
            <person name="Devuyst O."/>
            <person name="Balligand J.L."/>
        </authorList>
    </citation>
    <scope>FUNCTION</scope>
    <scope>TRANSPORTER ACTIVITY</scope>
</reference>
<reference key="23">
    <citation type="journal article" date="2023" name="Biophys. Rep. (N.Y.)">
        <title>Proteoliposomes reconstituted with human aquaporin-1 reveal novel single-ion-channel properties.</title>
        <authorList>
            <person name="Henderson S.W."/>
            <person name="Nakayama Y."/>
            <person name="Whitelaw M.L."/>
            <person name="Bruning J.B."/>
            <person name="Anderson P.A."/>
            <person name="Tyerman S.D."/>
            <person name="Ramesh S.A."/>
            <person name="Martinac B."/>
            <person name="Yool A.J."/>
        </authorList>
    </citation>
    <scope>TRANSPORTER ACTIVITY</scope>
</reference>
<reference key="24">
    <citation type="journal article" date="1994" name="EMBO J.">
        <title>The three-dimensional structure of human erythrocyte aquaporin CHIP.</title>
        <authorList>
            <person name="Walz T."/>
            <person name="Smith B.L."/>
            <person name="Agre P."/>
            <person name="Engel A."/>
        </authorList>
    </citation>
    <scope>STRUCTURE BY ELECTRON MICROSCOPY (1.6 ANGSTROMS)</scope>
</reference>
<reference key="25">
    <citation type="journal article" date="1997" name="Nature">
        <title>The three-dimensional structure of aquaporin-1.</title>
        <authorList>
            <person name="Walz T."/>
            <person name="Hirai T."/>
            <person name="Murata K."/>
            <person name="Heymann J.B."/>
            <person name="Mitsuoka K."/>
            <person name="Fujiyoshi Y."/>
            <person name="Smith B.L."/>
            <person name="Agre P."/>
            <person name="Engel A."/>
        </authorList>
    </citation>
    <scope>STRUCTURE BY ELECTRON MICROSCOPY (6 ANGSTROMS)</scope>
</reference>
<reference evidence="33" key="26">
    <citation type="journal article" date="2000" name="Nature">
        <title>Structural determinants of water permeation through aquaporin-1.</title>
        <authorList>
            <person name="Murata K."/>
            <person name="Mitsuoka K."/>
            <person name="Hirai T."/>
            <person name="Walz T."/>
            <person name="Agre P."/>
            <person name="Heymann J.B."/>
            <person name="Engel A."/>
            <person name="Fujiyoshi Y."/>
        </authorList>
    </citation>
    <scope>STRUCTURE BY ELECTRON MICROSCOPY (3.8 ANGSTROMS)</scope>
</reference>
<reference evidence="34" key="27">
    <citation type="journal article" date="2001" name="FEBS Lett.">
        <title>A refined structure of human aquaporin-1.</title>
        <authorList>
            <person name="de Groot B.L."/>
            <person name="Engel A."/>
            <person name="Grubmueller H."/>
        </authorList>
    </citation>
    <scope>STRUCTURE BY ELECTRON MICROSCOPY (3.54 ANGSTROMS)</scope>
</reference>
<reference evidence="35" key="28">
    <citation type="journal article" date="2001" name="Proc. Natl. Acad. Sci. U.S.A.">
        <title>Visualization of a water-selective pore by electron crystallography in vitreous ice.</title>
        <authorList>
            <person name="Ren G."/>
            <person name="Reddy V.S."/>
            <person name="Cheng A."/>
            <person name="Melnyk P."/>
            <person name="Mitra A.K."/>
        </authorList>
    </citation>
    <scope>STRUCTURE BY ELECTRON MICROSCOPY (3.7 ANGSTROMS)</scope>
    <scope>SUBUNIT</scope>
</reference>
<reference evidence="36 37 38" key="29">
    <citation type="journal article" date="2022" name="Nat. Struct. Mol. Biol.">
        <title>Architecture of the human erythrocyte ankyrin-1 complex.</title>
        <authorList>
            <person name="Vallese F."/>
            <person name="Kim K."/>
            <person name="Yen L.Y."/>
            <person name="Johnston J.D."/>
            <person name="Noble A.J."/>
            <person name="Cali T."/>
            <person name="Clarke O.B."/>
        </authorList>
    </citation>
    <scope>STRUCTURE BY ELECTRON MICROSCOPY (2.40 ANGSTROMS)</scope>
    <scope>FUNCTION</scope>
    <scope>SUBUNIT</scope>
    <scope>ANKYRIN-1 COMPLEX IDENTIFICATION</scope>
    <scope>INTERACTION WITH ANK1 AND EPB42</scope>
    <scope>TOPOLOGY</scope>
</reference>
<reference key="30">
    <citation type="journal article" date="1994" name="J. Clin. Invest.">
        <title>Human red cell aquaporin CHIP. I. Molecular characterization of ABH and Colton blood group antigens.</title>
        <authorList>
            <person name="Smith B.L."/>
            <person name="Preston G.M."/>
            <person name="Spring F."/>
            <person name="Anstee D.J."/>
            <person name="Agre P."/>
        </authorList>
    </citation>
    <scope>VARIANT VAL-45</scope>
    <scope>INVOLVEMENT IN COLTON BLOOD GROUP SYSTEM</scope>
</reference>
<reference key="31">
    <citation type="journal article" date="1994" name="Science">
        <title>Mutations in aquaporin-1 in phenotypically normal humans without functional CHIP water channels.</title>
        <authorList>
            <person name="Preston G.M."/>
            <person name="Smith B.L."/>
            <person name="Zeidel M.L."/>
            <person name="Moulds J.J."/>
            <person name="Agre P."/>
        </authorList>
    </citation>
    <scope>VARIANT LEU-38</scope>
    <scope>INVOLVEMENT IN COLTON BLOOD GROUP SYSTEM</scope>
</reference>
<keyword id="KW-0002">3D-structure</keyword>
<keyword id="KW-0025">Alternative splicing</keyword>
<keyword id="KW-0095">Blood group antigen</keyword>
<keyword id="KW-1003">Cell membrane</keyword>
<keyword id="KW-0903">Direct protein sequencing</keyword>
<keyword id="KW-0325">Glycoprotein</keyword>
<keyword id="KW-0472">Membrane</keyword>
<keyword id="KW-0597">Phosphoprotein</keyword>
<keyword id="KW-1267">Proteomics identification</keyword>
<keyword id="KW-1185">Reference proteome</keyword>
<keyword id="KW-0677">Repeat</keyword>
<keyword id="KW-0812">Transmembrane</keyword>
<keyword id="KW-1133">Transmembrane helix</keyword>
<keyword id="KW-0813">Transport</keyword>
<gene>
    <name evidence="32" type="primary">AQP1</name>
    <name evidence="22" type="synonym">CHIP28</name>
</gene>
<accession>P29972</accession>
<accession>B5BU39</accession>
<accession>E7EM69</accession>
<accession>E9PC21</accession>
<accession>F5GY19</accession>
<accession>Q8TBI5</accession>
<accession>Q8TDC1</accession>
<dbReference type="EMBL" id="M77829">
    <property type="protein sequence ID" value="AAA58425.1"/>
    <property type="molecule type" value="mRNA"/>
</dbReference>
<dbReference type="EMBL" id="U41517">
    <property type="protein sequence ID" value="AAC50648.1"/>
    <property type="molecule type" value="mRNA"/>
</dbReference>
<dbReference type="EMBL" id="U41518">
    <property type="protein sequence ID" value="AAC50649.1"/>
    <property type="molecule type" value="mRNA"/>
</dbReference>
<dbReference type="EMBL" id="S73482">
    <property type="protein sequence ID" value="AAB31193.1"/>
    <property type="molecule type" value="mRNA"/>
</dbReference>
<dbReference type="EMBL" id="AK309608">
    <property type="status" value="NOT_ANNOTATED_CDS"/>
    <property type="molecule type" value="mRNA"/>
</dbReference>
<dbReference type="EMBL" id="AY953319">
    <property type="protein sequence ID" value="AAX24129.1"/>
    <property type="molecule type" value="Genomic_DNA"/>
</dbReference>
<dbReference type="EMBL" id="AC004691">
    <property type="protein sequence ID" value="AAC16481.1"/>
    <property type="molecule type" value="Genomic_DNA"/>
</dbReference>
<dbReference type="EMBL" id="AC005155">
    <property type="protein sequence ID" value="AAC23788.1"/>
    <property type="molecule type" value="Genomic_DNA"/>
</dbReference>
<dbReference type="EMBL" id="AB451275">
    <property type="protein sequence ID" value="BAG70089.1"/>
    <property type="molecule type" value="mRNA"/>
</dbReference>
<dbReference type="EMBL" id="AB451402">
    <property type="protein sequence ID" value="BAG70216.1"/>
    <property type="molecule type" value="mRNA"/>
</dbReference>
<dbReference type="EMBL" id="CH471073">
    <property type="protein sequence ID" value="EAW93971.1"/>
    <property type="molecule type" value="Genomic_DNA"/>
</dbReference>
<dbReference type="EMBL" id="BC022486">
    <property type="protein sequence ID" value="AAH22486.1"/>
    <property type="molecule type" value="mRNA"/>
</dbReference>
<dbReference type="EMBL" id="AF480415">
    <property type="protein sequence ID" value="AAL87136.1"/>
    <property type="molecule type" value="Genomic_DNA"/>
</dbReference>
<dbReference type="CCDS" id="CCDS5431.1">
    <molecule id="P29972-1"/>
</dbReference>
<dbReference type="PIR" id="A41616">
    <property type="entry name" value="A41616"/>
</dbReference>
<dbReference type="PIR" id="I52366">
    <property type="entry name" value="I52366"/>
</dbReference>
<dbReference type="RefSeq" id="NP_932766.1">
    <molecule id="P29972-1"/>
    <property type="nucleotide sequence ID" value="NM_198098.4"/>
</dbReference>
<dbReference type="PDB" id="1FQY">
    <property type="method" value="X-ray"/>
    <property type="resolution" value="3.80 A"/>
    <property type="chains" value="A=1-269"/>
</dbReference>
<dbReference type="PDB" id="1H6I">
    <property type="method" value="X-ray"/>
    <property type="resolution" value="3.54 A"/>
    <property type="chains" value="A=1-269"/>
</dbReference>
<dbReference type="PDB" id="1IH5">
    <property type="method" value="X-ray"/>
    <property type="resolution" value="3.70 A"/>
    <property type="chains" value="A=1-269"/>
</dbReference>
<dbReference type="PDB" id="4CSK">
    <property type="method" value="X-ray"/>
    <property type="resolution" value="3.28 A"/>
    <property type="chains" value="A=1-269"/>
</dbReference>
<dbReference type="PDB" id="6POJ">
    <property type="method" value="NMR"/>
    <property type="chains" value="A=1-269"/>
</dbReference>
<dbReference type="PDB" id="7UZE">
    <property type="method" value="EM"/>
    <property type="resolution" value="2.40 A"/>
    <property type="chains" value="A/B/C/D=1-269"/>
</dbReference>
<dbReference type="PDB" id="8CT2">
    <property type="method" value="EM"/>
    <property type="resolution" value="3.10 A"/>
    <property type="chains" value="A/B/C/D=1-269"/>
</dbReference>
<dbReference type="PDB" id="8CTE">
    <property type="method" value="EM"/>
    <property type="resolution" value="2.90 A"/>
    <property type="chains" value="M/O/R/S=1-269"/>
</dbReference>
<dbReference type="PDBsum" id="1FQY"/>
<dbReference type="PDBsum" id="1H6I"/>
<dbReference type="PDBsum" id="1IH5"/>
<dbReference type="PDBsum" id="4CSK"/>
<dbReference type="PDBsum" id="6POJ"/>
<dbReference type="PDBsum" id="7UZE"/>
<dbReference type="PDBsum" id="8CT2"/>
<dbReference type="PDBsum" id="8CTE"/>
<dbReference type="EMDB" id="EMD-26886"/>
<dbReference type="EMDB" id="EMD-26978"/>
<dbReference type="EMDB" id="EMD-26988"/>
<dbReference type="SMR" id="P29972"/>
<dbReference type="BioGRID" id="106854">
    <property type="interactions" value="136"/>
</dbReference>
<dbReference type="CORUM" id="P29972"/>
<dbReference type="DIP" id="DIP-29607N"/>
<dbReference type="FunCoup" id="P29972">
    <property type="interactions" value="116"/>
</dbReference>
<dbReference type="IntAct" id="P29972">
    <property type="interactions" value="146"/>
</dbReference>
<dbReference type="MINT" id="P29972"/>
<dbReference type="STRING" id="9606.ENSP00000311165"/>
<dbReference type="BindingDB" id="P29972"/>
<dbReference type="ChEMBL" id="CHEMBL4523210"/>
<dbReference type="DrugBank" id="DB00819">
    <property type="generic name" value="Acetazolamide"/>
</dbReference>
<dbReference type="DrugBank" id="DB02451">
    <property type="generic name" value="B-nonylglucoside"/>
</dbReference>
<dbReference type="DrugBank" id="DB09338">
    <property type="generic name" value="Mersalyl"/>
</dbReference>
<dbReference type="DrugBank" id="DB08837">
    <property type="generic name" value="Tetraethylammonium"/>
</dbReference>
<dbReference type="DrugCentral" id="P29972"/>
<dbReference type="GuidetoPHARMACOLOGY" id="688"/>
<dbReference type="TCDB" id="1.A.8.8.1">
    <property type="family name" value="the major intrinsic protein (mip) family"/>
</dbReference>
<dbReference type="GlyCosmos" id="P29972">
    <property type="glycosylation" value="3 sites, 1 glycan"/>
</dbReference>
<dbReference type="GlyGen" id="P29972">
    <property type="glycosylation" value="5 sites, 1 O-linked glycan (1 site)"/>
</dbReference>
<dbReference type="iPTMnet" id="P29972"/>
<dbReference type="PhosphoSitePlus" id="P29972"/>
<dbReference type="BioMuta" id="AQP1"/>
<dbReference type="DMDM" id="267412"/>
<dbReference type="jPOST" id="P29972"/>
<dbReference type="MassIVE" id="P29972"/>
<dbReference type="PaxDb" id="9606-ENSP00000311165"/>
<dbReference type="PeptideAtlas" id="P29972"/>
<dbReference type="ProteomicsDB" id="16873"/>
<dbReference type="ProteomicsDB" id="19345"/>
<dbReference type="ProteomicsDB" id="24598"/>
<dbReference type="ProteomicsDB" id="54613">
    <molecule id="P29972-1"/>
</dbReference>
<dbReference type="Antibodypedia" id="35017">
    <property type="antibodies" value="578 antibodies from 38 providers"/>
</dbReference>
<dbReference type="DNASU" id="358"/>
<dbReference type="Ensembl" id="ENST00000311813.11">
    <molecule id="P29972-1"/>
    <property type="protein sequence ID" value="ENSP00000311165.4"/>
    <property type="gene ID" value="ENSG00000240583.14"/>
</dbReference>
<dbReference type="Ensembl" id="ENST00000409611.1">
    <molecule id="P29972-3"/>
    <property type="protein sequence ID" value="ENSP00000387178.1"/>
    <property type="gene ID" value="ENSG00000240583.14"/>
</dbReference>
<dbReference type="Ensembl" id="ENST00000409899.5">
    <molecule id="P29972-4"/>
    <property type="protein sequence ID" value="ENSP00000386712.1"/>
    <property type="gene ID" value="ENSG00000240583.14"/>
</dbReference>
<dbReference type="Ensembl" id="ENST00000652696.1">
    <molecule id="P29972-1"/>
    <property type="protein sequence ID" value="ENSP00000498672.1"/>
    <property type="gene ID" value="ENSG00000240583.14"/>
</dbReference>
<dbReference type="GeneID" id="358"/>
<dbReference type="KEGG" id="hsa:358"/>
<dbReference type="MANE-Select" id="ENST00000311813.11">
    <property type="protein sequence ID" value="ENSP00000311165.4"/>
    <property type="RefSeq nucleotide sequence ID" value="NM_198098.4"/>
    <property type="RefSeq protein sequence ID" value="NP_932766.1"/>
</dbReference>
<dbReference type="UCSC" id="uc003tbv.3">
    <molecule id="P29972-1"/>
    <property type="organism name" value="human"/>
</dbReference>
<dbReference type="AGR" id="HGNC:633"/>
<dbReference type="CTD" id="358"/>
<dbReference type="DisGeNET" id="358"/>
<dbReference type="GeneCards" id="AQP1"/>
<dbReference type="HGNC" id="HGNC:633">
    <property type="gene designation" value="AQP1"/>
</dbReference>
<dbReference type="HPA" id="ENSG00000240583">
    <property type="expression patterns" value="Tissue enhanced (choroid)"/>
</dbReference>
<dbReference type="MalaCards" id="AQP1"/>
<dbReference type="MIM" id="107776">
    <property type="type" value="gene"/>
</dbReference>
<dbReference type="MIM" id="110450">
    <property type="type" value="phenotype"/>
</dbReference>
<dbReference type="neXtProt" id="NX_P29972"/>
<dbReference type="OpenTargets" id="ENSG00000240583"/>
<dbReference type="PharmGKB" id="PA24918"/>
<dbReference type="VEuPathDB" id="HostDB:ENSG00000240583"/>
<dbReference type="eggNOG" id="KOG0223">
    <property type="taxonomic scope" value="Eukaryota"/>
</dbReference>
<dbReference type="GeneTree" id="ENSGT00940000157015"/>
<dbReference type="HOGENOM" id="CLU_020019_3_3_1"/>
<dbReference type="InParanoid" id="P29972"/>
<dbReference type="OMA" id="FKKKMFW"/>
<dbReference type="OrthoDB" id="3222at2759"/>
<dbReference type="PAN-GO" id="P29972">
    <property type="GO annotations" value="8 GO annotations based on evolutionary models"/>
</dbReference>
<dbReference type="PhylomeDB" id="P29972"/>
<dbReference type="TreeFam" id="TF312940"/>
<dbReference type="PathwayCommons" id="P29972"/>
<dbReference type="Reactome" id="R-HSA-1237044">
    <property type="pathway name" value="Erythrocytes take up carbon dioxide and release oxygen"/>
</dbReference>
<dbReference type="Reactome" id="R-HSA-1247673">
    <property type="pathway name" value="Erythrocytes take up oxygen and release carbon dioxide"/>
</dbReference>
<dbReference type="Reactome" id="R-HSA-432040">
    <property type="pathway name" value="Vasopressin regulates renal water homeostasis via Aquaporins"/>
</dbReference>
<dbReference type="Reactome" id="R-HSA-432047">
    <property type="pathway name" value="Passive transport by Aquaporins"/>
</dbReference>
<dbReference type="SignaLink" id="P29972"/>
<dbReference type="SIGNOR" id="P29972"/>
<dbReference type="BioGRID-ORCS" id="358">
    <property type="hits" value="14 hits in 1175 CRISPR screens"/>
</dbReference>
<dbReference type="ChiTaRS" id="AQP1">
    <property type="organism name" value="human"/>
</dbReference>
<dbReference type="EvolutionaryTrace" id="P29972"/>
<dbReference type="GeneWiki" id="Aquaporin_1"/>
<dbReference type="GenomeRNAi" id="358"/>
<dbReference type="Pharos" id="P29972">
    <property type="development level" value="Tbio"/>
</dbReference>
<dbReference type="PRO" id="PR:P29972"/>
<dbReference type="Proteomes" id="UP000005640">
    <property type="component" value="Chromosome 7"/>
</dbReference>
<dbReference type="RNAct" id="P29972">
    <property type="molecule type" value="protein"/>
</dbReference>
<dbReference type="Bgee" id="ENSG00000240583">
    <property type="expression patterns" value="Expressed in descending thoracic aorta and 196 other cell types or tissues"/>
</dbReference>
<dbReference type="ExpressionAtlas" id="P29972">
    <property type="expression patterns" value="baseline and differential"/>
</dbReference>
<dbReference type="GO" id="GO:0170014">
    <property type="term" value="C:ankyrin-1 complex"/>
    <property type="evidence" value="ECO:0000314"/>
    <property type="project" value="UniProtKB"/>
</dbReference>
<dbReference type="GO" id="GO:0045177">
    <property type="term" value="C:apical part of cell"/>
    <property type="evidence" value="ECO:0000314"/>
    <property type="project" value="UniProtKB"/>
</dbReference>
<dbReference type="GO" id="GO:0016324">
    <property type="term" value="C:apical plasma membrane"/>
    <property type="evidence" value="ECO:0000314"/>
    <property type="project" value="UniProtKB"/>
</dbReference>
<dbReference type="GO" id="GO:0030424">
    <property type="term" value="C:axon"/>
    <property type="evidence" value="ECO:0007669"/>
    <property type="project" value="Ensembl"/>
</dbReference>
<dbReference type="GO" id="GO:0009925">
    <property type="term" value="C:basal plasma membrane"/>
    <property type="evidence" value="ECO:0000314"/>
    <property type="project" value="UniProtKB"/>
</dbReference>
<dbReference type="GO" id="GO:0016323">
    <property type="term" value="C:basolateral plasma membrane"/>
    <property type="evidence" value="ECO:0000314"/>
    <property type="project" value="UniProtKB"/>
</dbReference>
<dbReference type="GO" id="GO:0005903">
    <property type="term" value="C:brush border"/>
    <property type="evidence" value="ECO:0000314"/>
    <property type="project" value="UniProtKB"/>
</dbReference>
<dbReference type="GO" id="GO:0031526">
    <property type="term" value="C:brush border membrane"/>
    <property type="evidence" value="ECO:0000314"/>
    <property type="project" value="UniProtKB"/>
</dbReference>
<dbReference type="GO" id="GO:0005737">
    <property type="term" value="C:cytoplasm"/>
    <property type="evidence" value="ECO:0000314"/>
    <property type="project" value="UniProtKB"/>
</dbReference>
<dbReference type="GO" id="GO:0070062">
    <property type="term" value="C:extracellular exosome"/>
    <property type="evidence" value="ECO:0000314"/>
    <property type="project" value="UniProtKB"/>
</dbReference>
<dbReference type="GO" id="GO:0031965">
    <property type="term" value="C:nuclear membrane"/>
    <property type="evidence" value="ECO:0000314"/>
    <property type="project" value="UniProtKB"/>
</dbReference>
<dbReference type="GO" id="GO:0005634">
    <property type="term" value="C:nucleus"/>
    <property type="evidence" value="ECO:0000314"/>
    <property type="project" value="UniProtKB"/>
</dbReference>
<dbReference type="GO" id="GO:0005886">
    <property type="term" value="C:plasma membrane"/>
    <property type="evidence" value="ECO:0000314"/>
    <property type="project" value="HPA"/>
</dbReference>
<dbReference type="GO" id="GO:0042383">
    <property type="term" value="C:sarcolemma"/>
    <property type="evidence" value="ECO:0000314"/>
    <property type="project" value="UniProtKB"/>
</dbReference>
<dbReference type="GO" id="GO:0008519">
    <property type="term" value="F:ammonium channel activity"/>
    <property type="evidence" value="ECO:0000314"/>
    <property type="project" value="UniProtKB"/>
</dbReference>
<dbReference type="GO" id="GO:0035379">
    <property type="term" value="F:carbon dioxide transmembrane transporter activity"/>
    <property type="evidence" value="ECO:0000314"/>
    <property type="project" value="UniProtKB"/>
</dbReference>
<dbReference type="GO" id="GO:0046875">
    <property type="term" value="F:ephrin receptor binding"/>
    <property type="evidence" value="ECO:0007669"/>
    <property type="project" value="Ensembl"/>
</dbReference>
<dbReference type="GO" id="GO:0015168">
    <property type="term" value="F:glycerol transmembrane transporter activity"/>
    <property type="evidence" value="ECO:0000314"/>
    <property type="project" value="UniProtKB"/>
</dbReference>
<dbReference type="GO" id="GO:0140070">
    <property type="term" value="F:hydrogen peroxide channel activity"/>
    <property type="evidence" value="ECO:0000314"/>
    <property type="project" value="UniProtKB"/>
</dbReference>
<dbReference type="GO" id="GO:0042802">
    <property type="term" value="F:identical protein binding"/>
    <property type="evidence" value="ECO:0000353"/>
    <property type="project" value="IntAct"/>
</dbReference>
<dbReference type="GO" id="GO:0005223">
    <property type="term" value="F:intracellularly cGMP-activated cation channel activity"/>
    <property type="evidence" value="ECO:0000314"/>
    <property type="project" value="UniProtKB"/>
</dbReference>
<dbReference type="GO" id="GO:0030184">
    <property type="term" value="F:nitric oxide transmembrane transporter activity"/>
    <property type="evidence" value="ECO:0000314"/>
    <property type="project" value="UniProtKB"/>
</dbReference>
<dbReference type="GO" id="GO:0005267">
    <property type="term" value="F:potassium channel activity"/>
    <property type="evidence" value="ECO:0000315"/>
    <property type="project" value="UniProtKB"/>
</dbReference>
<dbReference type="GO" id="GO:0015079">
    <property type="term" value="F:potassium ion transmembrane transporter activity"/>
    <property type="evidence" value="ECO:0000250"/>
    <property type="project" value="UniProtKB"/>
</dbReference>
<dbReference type="GO" id="GO:0022857">
    <property type="term" value="F:transmembrane transporter activity"/>
    <property type="evidence" value="ECO:0000314"/>
    <property type="project" value="UniProtKB"/>
</dbReference>
<dbReference type="GO" id="GO:0015250">
    <property type="term" value="F:water channel activity"/>
    <property type="evidence" value="ECO:0000314"/>
    <property type="project" value="UniProtKB"/>
</dbReference>
<dbReference type="GO" id="GO:0005372">
    <property type="term" value="F:water transmembrane transporter activity"/>
    <property type="evidence" value="ECO:0000314"/>
    <property type="project" value="UniProtKB"/>
</dbReference>
<dbReference type="GO" id="GO:0072488">
    <property type="term" value="P:ammonium transmembrane transport"/>
    <property type="evidence" value="ECO:0000314"/>
    <property type="project" value="UniProtKB"/>
</dbReference>
<dbReference type="GO" id="GO:0048593">
    <property type="term" value="P:camera-type eye morphogenesis"/>
    <property type="evidence" value="ECO:0007669"/>
    <property type="project" value="Ensembl"/>
</dbReference>
<dbReference type="GO" id="GO:0035378">
    <property type="term" value="P:carbon dioxide transmembrane transport"/>
    <property type="evidence" value="ECO:0000314"/>
    <property type="project" value="UniProtKB"/>
</dbReference>
<dbReference type="GO" id="GO:0015670">
    <property type="term" value="P:carbon dioxide transport"/>
    <property type="evidence" value="ECO:0000314"/>
    <property type="project" value="UniProtKB"/>
</dbReference>
<dbReference type="GO" id="GO:0006884">
    <property type="term" value="P:cell volume homeostasis"/>
    <property type="evidence" value="ECO:0000315"/>
    <property type="project" value="UniProtKB"/>
</dbReference>
<dbReference type="GO" id="GO:0019725">
    <property type="term" value="P:cellular homeostasis"/>
    <property type="evidence" value="ECO:0000314"/>
    <property type="project" value="UniProtKB"/>
</dbReference>
<dbReference type="GO" id="GO:0071474">
    <property type="term" value="P:cellular hyperosmotic response"/>
    <property type="evidence" value="ECO:0000315"/>
    <property type="project" value="UniProtKB"/>
</dbReference>
<dbReference type="GO" id="GO:0071320">
    <property type="term" value="P:cellular response to cAMP"/>
    <property type="evidence" value="ECO:0000314"/>
    <property type="project" value="UniProtKB"/>
</dbReference>
<dbReference type="GO" id="GO:0071280">
    <property type="term" value="P:cellular response to copper ion"/>
    <property type="evidence" value="ECO:0000314"/>
    <property type="project" value="UniProtKB"/>
</dbReference>
<dbReference type="GO" id="GO:0071549">
    <property type="term" value="P:cellular response to dexamethasone stimulus"/>
    <property type="evidence" value="ECO:0000314"/>
    <property type="project" value="UniProtKB"/>
</dbReference>
<dbReference type="GO" id="GO:0070301">
    <property type="term" value="P:cellular response to hydrogen peroxide"/>
    <property type="evidence" value="ECO:0000314"/>
    <property type="project" value="UniProtKB"/>
</dbReference>
<dbReference type="GO" id="GO:0071456">
    <property type="term" value="P:cellular response to hypoxia"/>
    <property type="evidence" value="ECO:0000314"/>
    <property type="project" value="UniProtKB"/>
</dbReference>
<dbReference type="GO" id="GO:0071260">
    <property type="term" value="P:cellular response to mechanical stimulus"/>
    <property type="evidence" value="ECO:0000314"/>
    <property type="project" value="UniProtKB"/>
</dbReference>
<dbReference type="GO" id="GO:0071288">
    <property type="term" value="P:cellular response to mercury ion"/>
    <property type="evidence" value="ECO:0000314"/>
    <property type="project" value="UniProtKB"/>
</dbReference>
<dbReference type="GO" id="GO:0071732">
    <property type="term" value="P:cellular response to nitric oxide"/>
    <property type="evidence" value="ECO:0000314"/>
    <property type="project" value="UniProtKB"/>
</dbReference>
<dbReference type="GO" id="GO:0071300">
    <property type="term" value="P:cellular response to retinoic acid"/>
    <property type="evidence" value="ECO:0000314"/>
    <property type="project" value="UniProtKB"/>
</dbReference>
<dbReference type="GO" id="GO:0071472">
    <property type="term" value="P:cellular response to salt stress"/>
    <property type="evidence" value="ECO:0000314"/>
    <property type="project" value="UniProtKB"/>
</dbReference>
<dbReference type="GO" id="GO:0034644">
    <property type="term" value="P:cellular response to UV"/>
    <property type="evidence" value="ECO:0000314"/>
    <property type="project" value="UniProtKB"/>
</dbReference>
<dbReference type="GO" id="GO:0033326">
    <property type="term" value="P:cerebrospinal fluid secretion"/>
    <property type="evidence" value="ECO:0000270"/>
    <property type="project" value="UniProtKB"/>
</dbReference>
<dbReference type="GO" id="GO:0019934">
    <property type="term" value="P:cGMP-mediated signaling"/>
    <property type="evidence" value="ECO:0000314"/>
    <property type="project" value="UniProtKB"/>
</dbReference>
<dbReference type="GO" id="GO:0051458">
    <property type="term" value="P:corticotropin secretion"/>
    <property type="evidence" value="ECO:0007669"/>
    <property type="project" value="Ensembl"/>
</dbReference>
<dbReference type="GO" id="GO:0050829">
    <property type="term" value="P:defense response to Gram-negative bacterium"/>
    <property type="evidence" value="ECO:0000315"/>
    <property type="project" value="UniProtKB"/>
</dbReference>
<dbReference type="GO" id="GO:0051649">
    <property type="term" value="P:establishment of localization in cell"/>
    <property type="evidence" value="ECO:0007669"/>
    <property type="project" value="Ensembl"/>
</dbReference>
<dbReference type="GO" id="GO:0030950">
    <property type="term" value="P:establishment or maintenance of actin cytoskeleton polarity"/>
    <property type="evidence" value="ECO:0000315"/>
    <property type="project" value="UniProtKB"/>
</dbReference>
<dbReference type="GO" id="GO:0010761">
    <property type="term" value="P:fibroblast migration"/>
    <property type="evidence" value="ECO:0007669"/>
    <property type="project" value="Ensembl"/>
</dbReference>
<dbReference type="GO" id="GO:0003094">
    <property type="term" value="P:glomerular filtration"/>
    <property type="evidence" value="ECO:0007669"/>
    <property type="project" value="Ensembl"/>
</dbReference>
<dbReference type="GO" id="GO:0015793">
    <property type="term" value="P:glycerol transmembrane transport"/>
    <property type="evidence" value="ECO:0000314"/>
    <property type="project" value="UniProtKB"/>
</dbReference>
<dbReference type="GO" id="GO:0006972">
    <property type="term" value="P:hyperosmotic response"/>
    <property type="evidence" value="ECO:0000318"/>
    <property type="project" value="GO_Central"/>
</dbReference>
<dbReference type="GO" id="GO:0009992">
    <property type="term" value="P:intracellular water homeostasis"/>
    <property type="evidence" value="ECO:0000314"/>
    <property type="project" value="UniProtKB"/>
</dbReference>
<dbReference type="GO" id="GO:0021670">
    <property type="term" value="P:lateral ventricle development"/>
    <property type="evidence" value="ECO:0000270"/>
    <property type="project" value="UniProtKB"/>
</dbReference>
<dbReference type="GO" id="GO:0044241">
    <property type="term" value="P:lipid digestion"/>
    <property type="evidence" value="ECO:0007669"/>
    <property type="project" value="Ensembl"/>
</dbReference>
<dbReference type="GO" id="GO:0072220">
    <property type="term" value="P:metanephric descending thin limb development"/>
    <property type="evidence" value="ECO:0007669"/>
    <property type="project" value="Ensembl"/>
</dbReference>
<dbReference type="GO" id="GO:0072239">
    <property type="term" value="P:metanephric glomerulus vasculature development"/>
    <property type="evidence" value="ECO:0007669"/>
    <property type="project" value="Ensembl"/>
</dbReference>
<dbReference type="GO" id="GO:0072232">
    <property type="term" value="P:metanephric proximal convoluted tubule segment 2 development"/>
    <property type="evidence" value="ECO:0007669"/>
    <property type="project" value="Ensembl"/>
</dbReference>
<dbReference type="GO" id="GO:0072230">
    <property type="term" value="P:metanephric proximal straight tubule development"/>
    <property type="evidence" value="ECO:0007669"/>
    <property type="project" value="Ensembl"/>
</dbReference>
<dbReference type="GO" id="GO:0050891">
    <property type="term" value="P:multicellular organismal-level water homeostasis"/>
    <property type="evidence" value="ECO:0000270"/>
    <property type="project" value="UniProtKB"/>
</dbReference>
<dbReference type="GO" id="GO:0043066">
    <property type="term" value="P:negative regulation of apoptotic process"/>
    <property type="evidence" value="ECO:0000314"/>
    <property type="project" value="UniProtKB"/>
</dbReference>
<dbReference type="GO" id="GO:0030185">
    <property type="term" value="P:nitric oxide transport"/>
    <property type="evidence" value="ECO:0000314"/>
    <property type="project" value="UniProtKB"/>
</dbReference>
<dbReference type="GO" id="GO:0042476">
    <property type="term" value="P:odontogenesis"/>
    <property type="evidence" value="ECO:0000270"/>
    <property type="project" value="UniProtKB"/>
</dbReference>
<dbReference type="GO" id="GO:0030157">
    <property type="term" value="P:pancreatic juice secretion"/>
    <property type="evidence" value="ECO:0000270"/>
    <property type="project" value="UniProtKB"/>
</dbReference>
<dbReference type="GO" id="GO:0045766">
    <property type="term" value="P:positive regulation of angiogenesis"/>
    <property type="evidence" value="ECO:0000315"/>
    <property type="project" value="UniProtKB"/>
</dbReference>
<dbReference type="GO" id="GO:0010763">
    <property type="term" value="P:positive regulation of fibroblast migration"/>
    <property type="evidence" value="ECO:0007669"/>
    <property type="project" value="Ensembl"/>
</dbReference>
<dbReference type="GO" id="GO:0048146">
    <property type="term" value="P:positive regulation of fibroblast proliferation"/>
    <property type="evidence" value="ECO:0000314"/>
    <property type="project" value="UniProtKB"/>
</dbReference>
<dbReference type="GO" id="GO:0046878">
    <property type="term" value="P:positive regulation of saliva secretion"/>
    <property type="evidence" value="ECO:0000315"/>
    <property type="project" value="UniProtKB"/>
</dbReference>
<dbReference type="GO" id="GO:0006813">
    <property type="term" value="P:potassium ion transport"/>
    <property type="evidence" value="ECO:0000250"/>
    <property type="project" value="UniProtKB"/>
</dbReference>
<dbReference type="GO" id="GO:0070295">
    <property type="term" value="P:renal water absorption"/>
    <property type="evidence" value="ECO:0007669"/>
    <property type="project" value="Ensembl"/>
</dbReference>
<dbReference type="GO" id="GO:0003091">
    <property type="term" value="P:renal water homeostasis"/>
    <property type="evidence" value="ECO:0000304"/>
    <property type="project" value="Reactome"/>
</dbReference>
<dbReference type="GO" id="GO:0003097">
    <property type="term" value="P:renal water transport"/>
    <property type="evidence" value="ECO:0000314"/>
    <property type="project" value="UniProtKB"/>
</dbReference>
<dbReference type="GO" id="GO:0033363">
    <property type="term" value="P:secretory granule organization"/>
    <property type="evidence" value="ECO:0007669"/>
    <property type="project" value="Ensembl"/>
</dbReference>
<dbReference type="GO" id="GO:0019233">
    <property type="term" value="P:sensory perception of pain"/>
    <property type="evidence" value="ECO:0007669"/>
    <property type="project" value="Ensembl"/>
</dbReference>
<dbReference type="GO" id="GO:0035377">
    <property type="term" value="P:transepithelial water transport"/>
    <property type="evidence" value="ECO:0000314"/>
    <property type="project" value="UniProtKB"/>
</dbReference>
<dbReference type="GO" id="GO:0006833">
    <property type="term" value="P:water transport"/>
    <property type="evidence" value="ECO:0000314"/>
    <property type="project" value="UniProtKB"/>
</dbReference>
<dbReference type="GO" id="GO:0042060">
    <property type="term" value="P:wound healing"/>
    <property type="evidence" value="ECO:0007669"/>
    <property type="project" value="Ensembl"/>
</dbReference>
<dbReference type="CDD" id="cd00333">
    <property type="entry name" value="MIP"/>
    <property type="match status" value="1"/>
</dbReference>
<dbReference type="FunFam" id="1.20.1080.10:FF:000012">
    <property type="entry name" value="Aquaporin-1"/>
    <property type="match status" value="1"/>
</dbReference>
<dbReference type="Gene3D" id="1.20.1080.10">
    <property type="entry name" value="Glycerol uptake facilitator protein"/>
    <property type="match status" value="1"/>
</dbReference>
<dbReference type="InterPro" id="IPR023271">
    <property type="entry name" value="Aquaporin-like"/>
</dbReference>
<dbReference type="InterPro" id="IPR023274">
    <property type="entry name" value="Aquaporin_1"/>
</dbReference>
<dbReference type="InterPro" id="IPR034294">
    <property type="entry name" value="Aquaporin_transptr"/>
</dbReference>
<dbReference type="InterPro" id="IPR000425">
    <property type="entry name" value="MIP"/>
</dbReference>
<dbReference type="InterPro" id="IPR022357">
    <property type="entry name" value="MIP_CS"/>
</dbReference>
<dbReference type="NCBIfam" id="TIGR00861">
    <property type="entry name" value="MIP"/>
    <property type="match status" value="1"/>
</dbReference>
<dbReference type="PANTHER" id="PTHR19139">
    <property type="entry name" value="AQUAPORIN TRANSPORTER"/>
    <property type="match status" value="1"/>
</dbReference>
<dbReference type="PANTHER" id="PTHR19139:SF161">
    <property type="entry name" value="AQUAPORIN-1"/>
    <property type="match status" value="1"/>
</dbReference>
<dbReference type="Pfam" id="PF00230">
    <property type="entry name" value="MIP"/>
    <property type="match status" value="1"/>
</dbReference>
<dbReference type="PRINTS" id="PR02013">
    <property type="entry name" value="AQUAPORIN1"/>
</dbReference>
<dbReference type="PRINTS" id="PR00783">
    <property type="entry name" value="MINTRINSICP"/>
</dbReference>
<dbReference type="SUPFAM" id="SSF81338">
    <property type="entry name" value="Aquaporin-like"/>
    <property type="match status" value="1"/>
</dbReference>
<dbReference type="PROSITE" id="PS00221">
    <property type="entry name" value="MIP"/>
    <property type="match status" value="1"/>
</dbReference>
<name>AQP1_HUMAN</name>
<feature type="initiator methionine" description="Removed" evidence="8">
    <location>
        <position position="1"/>
    </location>
</feature>
<feature type="chain" id="PRO_0000063920" description="Aquaporin-1">
    <location>
        <begin position="2"/>
        <end position="269"/>
    </location>
</feature>
<feature type="topological domain" description="Cytoplasmic" evidence="13">
    <location>
        <begin position="2"/>
        <end position="11"/>
    </location>
</feature>
<feature type="transmembrane region" description="Helical; Name=Helix 1" evidence="28 37">
    <location>
        <begin position="12"/>
        <end position="29"/>
    </location>
</feature>
<feature type="topological domain" description="Extracellular" evidence="13">
    <location>
        <begin position="30"/>
        <end position="46"/>
    </location>
</feature>
<feature type="transmembrane region" description="Helical; Name=Helix 2" evidence="28 37">
    <location>
        <begin position="47"/>
        <end position="65"/>
    </location>
</feature>
<feature type="topological domain" description="Cytoplasmic" evidence="13">
    <location>
        <begin position="66"/>
        <end position="68"/>
    </location>
</feature>
<feature type="intramembrane region" evidence="28 37">
    <location>
        <begin position="69"/>
        <end position="82"/>
    </location>
</feature>
<feature type="topological domain" description="Cytoplasmic" evidence="13">
    <location>
        <begin position="83"/>
        <end position="90"/>
    </location>
</feature>
<feature type="transmembrane region" description="Helical; Name=Helix 3" evidence="28 37">
    <location>
        <begin position="91"/>
        <end position="109"/>
    </location>
</feature>
<feature type="topological domain" description="Extracellular" evidence="13">
    <location>
        <begin position="110"/>
        <end position="133"/>
    </location>
</feature>
<feature type="transmembrane region" description="Helical; Name=Helix 4" evidence="28 37">
    <location>
        <begin position="134"/>
        <end position="153"/>
    </location>
</feature>
<feature type="topological domain" description="Cytoplasmic" evidence="13">
    <location>
        <begin position="154"/>
        <end position="163"/>
    </location>
</feature>
<feature type="transmembrane region" description="Helical; Name=Helix 5" evidence="28 37">
    <location>
        <begin position="164"/>
        <end position="181"/>
    </location>
</feature>
<feature type="topological domain" description="Extracellular" evidence="13">
    <location>
        <begin position="182"/>
        <end position="186"/>
    </location>
</feature>
<feature type="intramembrane region" evidence="28 37">
    <location>
        <begin position="187"/>
        <end position="199"/>
    </location>
</feature>
<feature type="topological domain" description="Extracellular" evidence="13">
    <location>
        <begin position="200"/>
        <end position="206"/>
    </location>
</feature>
<feature type="transmembrane region" description="Helical; Name=Helix 6" evidence="28 37">
    <location>
        <begin position="207"/>
        <end position="224"/>
    </location>
</feature>
<feature type="topological domain" description="Cytoplasmic" evidence="13">
    <location>
        <begin position="225"/>
        <end position="269"/>
    </location>
</feature>
<feature type="short sequence motif" description="NPA 1" evidence="20">
    <location>
        <begin position="76"/>
        <end position="78"/>
    </location>
</feature>
<feature type="short sequence motif" description="NPA 2" evidence="20">
    <location>
        <begin position="192"/>
        <end position="194"/>
    </location>
</feature>
<feature type="site" description="Hg(2+)-sensitive residue" evidence="19">
    <location>
        <position position="189"/>
    </location>
</feature>
<feature type="modified residue" description="Phosphoserine" evidence="2">
    <location>
        <position position="247"/>
    </location>
</feature>
<feature type="modified residue" description="Phosphotyrosine" evidence="2">
    <location>
        <position position="253"/>
    </location>
</feature>
<feature type="modified residue" description="Phosphoserine" evidence="2">
    <location>
        <position position="262"/>
    </location>
</feature>
<feature type="glycosylation site" description="N-linked (GlcNAc...) asparagine" evidence="3">
    <location>
        <position position="42"/>
    </location>
</feature>
<feature type="glycosylation site" description="N-linked (GlcNAc...) asparagine" evidence="3">
    <location>
        <position position="205"/>
    </location>
</feature>
<feature type="splice variant" id="VSP_046679" description="In isoform 3." evidence="23">
    <original>MASEFKKKLFWRAVVAEFLATTLFVFISIGSALGFKYPVGNNQTAVQDNVKVSLAFGLSIATLAQSVGHISGAHLNPAVTLGLLLSCQISIFRALMYIIAQCVGAIVATAILSGITSSLTGNSLGRND</original>
    <variation>MFWTFGYEAVSPAGPSHLFASLLLGVLLTITFMPGARPLPLVLVPQNTLAWMQLDAKAPAHPRPLQLLGRVGPGSRQ</variation>
    <location>
        <begin position="1"/>
        <end position="128"/>
    </location>
</feature>
<feature type="splice variant" id="VSP_046109" description="In isoform 2." evidence="21">
    <original>MASEFKKKLFWRAVVAEFLATTLFVFISIGSALGFKYPVGNNQTA</original>
    <variation>MPGARPLPLVLVPQNTLAWMQLDAKAPAHPRPLQLLGRVGPGSRQ</variation>
    <location>
        <begin position="1"/>
        <end position="45"/>
    </location>
</feature>
<feature type="splice variant" id="VSP_046680" description="In isoform 4." evidence="23">
    <original>MASEFKKKLFWRA</original>
    <variation>MQSGMGWNVLDFW</variation>
    <location>
        <begin position="1"/>
        <end position="13"/>
    </location>
</feature>
<feature type="splice variant" id="VSP_046681" description="In isoform 4." evidence="23">
    <location>
        <begin position="14"/>
        <end position="128"/>
    </location>
</feature>
<feature type="splice variant" id="VSP_046110" description="In isoform 2." evidence="21">
    <location>
        <begin position="46"/>
        <end position="128"/>
    </location>
</feature>
<feature type="sequence variant" id="VAR_013279" description="In Co(A-B-) antigen; non functional AQP1; red cells show low osmotic water permeability; dbSNP:rs104894004." evidence="14">
    <original>P</original>
    <variation>L</variation>
    <location>
        <position position="38"/>
    </location>
</feature>
<feature type="sequence variant" id="VAR_004400" description="In Co(A-B+) antigen; dbSNP:rs28362692." evidence="15 19">
    <original>A</original>
    <variation>V</variation>
    <location>
        <position position="45"/>
    </location>
</feature>
<feature type="sequence variant" id="VAR_022318" description="In dbSNP:rs28362731." evidence="19">
    <original>G</original>
    <variation>D</variation>
    <location>
        <position position="165"/>
    </location>
</feature>
<feature type="mutagenesis site" description="No effect on water channel activity." evidence="17">
    <original>H</original>
    <variation>A</variation>
    <location>
        <position position="180"/>
    </location>
</feature>
<feature type="mutagenesis site" description="No effect on water channel activity." evidence="17">
    <original>C</original>
    <variation>S</variation>
    <location>
        <position position="189"/>
    </location>
</feature>
<feature type="mutagenesis site" description="Decreased water channel activity." evidence="17">
    <original>H</original>
    <variation>A</variation>
    <location>
        <position position="209"/>
    </location>
</feature>
<feature type="sequence conflict" description="In Ref. 10; AAH22486." evidence="23" ref="10">
    <original>A</original>
    <variation>T</variation>
    <location>
        <position position="45"/>
    </location>
</feature>
<feature type="helix" evidence="40">
    <location>
        <begin position="4"/>
        <end position="6"/>
    </location>
</feature>
<feature type="helix" evidence="40">
    <location>
        <begin position="8"/>
        <end position="32"/>
    </location>
</feature>
<feature type="helix" evidence="40">
    <location>
        <begin position="34"/>
        <end position="36"/>
    </location>
</feature>
<feature type="strand" evidence="40">
    <location>
        <begin position="38"/>
        <end position="40"/>
    </location>
</feature>
<feature type="helix" evidence="40">
    <location>
        <begin position="49"/>
        <end position="71"/>
    </location>
</feature>
<feature type="helix" evidence="40">
    <location>
        <begin position="77"/>
        <end position="85"/>
    </location>
</feature>
<feature type="helix" evidence="40">
    <location>
        <begin position="91"/>
        <end position="115"/>
    </location>
</feature>
<feature type="turn" evidence="40">
    <location>
        <begin position="116"/>
        <end position="118"/>
    </location>
</feature>
<feature type="strand" evidence="39">
    <location>
        <begin position="122"/>
        <end position="127"/>
    </location>
</feature>
<feature type="strand" evidence="39">
    <location>
        <begin position="131"/>
        <end position="133"/>
    </location>
</feature>
<feature type="helix" evidence="40">
    <location>
        <begin position="135"/>
        <end position="156"/>
    </location>
</feature>
<feature type="helix" evidence="40">
    <location>
        <begin position="168"/>
        <end position="187"/>
    </location>
</feature>
<feature type="helix" evidence="40">
    <location>
        <begin position="193"/>
        <end position="203"/>
    </location>
</feature>
<feature type="turn" evidence="40">
    <location>
        <begin position="207"/>
        <end position="210"/>
    </location>
</feature>
<feature type="helix" evidence="40">
    <location>
        <begin position="211"/>
        <end position="229"/>
    </location>
</feature>
<feature type="helix" evidence="40">
    <location>
        <begin position="238"/>
        <end position="247"/>
    </location>
</feature>
<feature type="strand" evidence="39">
    <location>
        <begin position="250"/>
        <end position="252"/>
    </location>
</feature>
<feature type="strand" evidence="39">
    <location>
        <begin position="259"/>
        <end position="261"/>
    </location>
</feature>
<evidence type="ECO:0000250" key="1"/>
<evidence type="ECO:0000250" key="2">
    <source>
        <dbReference type="UniProtKB" id="Q02013"/>
    </source>
</evidence>
<evidence type="ECO:0000255" key="3"/>
<evidence type="ECO:0000269" key="4">
    <source>
    </source>
</evidence>
<evidence type="ECO:0000269" key="5">
    <source>
    </source>
</evidence>
<evidence type="ECO:0000269" key="6">
    <source>
    </source>
</evidence>
<evidence type="ECO:0000269" key="7">
    <source>
    </source>
</evidence>
<evidence type="ECO:0000269" key="8">
    <source>
    </source>
</evidence>
<evidence type="ECO:0000269" key="9">
    <source>
    </source>
</evidence>
<evidence type="ECO:0000269" key="10">
    <source>
    </source>
</evidence>
<evidence type="ECO:0000269" key="11">
    <source>
    </source>
</evidence>
<evidence type="ECO:0000269" key="12">
    <source>
    </source>
</evidence>
<evidence type="ECO:0000269" key="13">
    <source>
    </source>
</evidence>
<evidence type="ECO:0000269" key="14">
    <source>
    </source>
</evidence>
<evidence type="ECO:0000269" key="15">
    <source>
    </source>
</evidence>
<evidence type="ECO:0000269" key="16">
    <source>
    </source>
</evidence>
<evidence type="ECO:0000269" key="17">
    <source>
    </source>
</evidence>
<evidence type="ECO:0000269" key="18">
    <source>
    </source>
</evidence>
<evidence type="ECO:0000269" key="19">
    <source ref="6"/>
</evidence>
<evidence type="ECO:0000303" key="20">
    <source>
    </source>
</evidence>
<evidence type="ECO:0000303" key="21">
    <source>
    </source>
</evidence>
<evidence type="ECO:0000303" key="22">
    <source>
    </source>
</evidence>
<evidence type="ECO:0000305" key="23"/>
<evidence type="ECO:0000305" key="24">
    <source>
    </source>
</evidence>
<evidence type="ECO:0000305" key="25">
    <source>
    </source>
</evidence>
<evidence type="ECO:0000305" key="26">
    <source>
    </source>
</evidence>
<evidence type="ECO:0000305" key="27">
    <source>
    </source>
</evidence>
<evidence type="ECO:0000305" key="28">
    <source>
    </source>
</evidence>
<evidence type="ECO:0000305" key="29">
    <source>
    </source>
</evidence>
<evidence type="ECO:0000305" key="30">
    <source>
    </source>
</evidence>
<evidence type="ECO:0000305" key="31">
    <source>
    </source>
</evidence>
<evidence type="ECO:0000312" key="32">
    <source>
        <dbReference type="HGNC" id="HGNC:633"/>
    </source>
</evidence>
<evidence type="ECO:0007744" key="33">
    <source>
        <dbReference type="PDB" id="1FQY"/>
    </source>
</evidence>
<evidence type="ECO:0007744" key="34">
    <source>
        <dbReference type="PDB" id="1H6I"/>
    </source>
</evidence>
<evidence type="ECO:0007744" key="35">
    <source>
        <dbReference type="PDB" id="1IH5"/>
    </source>
</evidence>
<evidence type="ECO:0007744" key="36">
    <source>
        <dbReference type="PDB" id="7UZE"/>
    </source>
</evidence>
<evidence type="ECO:0007744" key="37">
    <source>
        <dbReference type="PDB" id="8CT2"/>
    </source>
</evidence>
<evidence type="ECO:0007744" key="38">
    <source>
        <dbReference type="PDB" id="8CTE"/>
    </source>
</evidence>
<evidence type="ECO:0007829" key="39">
    <source>
        <dbReference type="PDB" id="6POJ"/>
    </source>
</evidence>
<evidence type="ECO:0007829" key="40">
    <source>
        <dbReference type="PDB" id="7UZE"/>
    </source>
</evidence>
<comment type="function">
    <text evidence="4 5 6 7 9 10 11 12 17 18">Forms a water channel that facilitates the transport of water across cell membranes, playing a crucial role in water homeostasis in various tissues (PubMed:1373524, PubMed:23219802). Could also be permeable to small solutes including hydrogen peroxide, glycerol and gases such as amonnia (NH3), nitric oxide (NO) and carbon dioxide (CO2) (PubMed:16682607, PubMed:17012249, PubMed:19273840, PubMed:33028705, PubMed:8584435). Recruited to the ankyrin-1 complex, a multiprotein complex of the erythrocyte membrane, it could be part of a CO2 metabolon, linking facilitated diffusion of CO2 across the membrane, anion exchange of Cl(-)/HCO3(-) and interconversion of dissolved CO2 and carbonic acid in the cytosol (PubMed:17012249, PubMed:35835865). In vitro, it shows non-selective gated cation channel activity and may be permeable to cations like K(+) and Na(+) in vivo (PubMed:36949749, PubMed:8703053).</text>
</comment>
<comment type="catalytic activity">
    <reaction evidence="11 12 17">
        <text>H2O(in) = H2O(out)</text>
        <dbReference type="Rhea" id="RHEA:29667"/>
        <dbReference type="ChEBI" id="CHEBI:15377"/>
    </reaction>
</comment>
<comment type="catalytic activity">
    <reaction evidence="24">
        <text>nitric oxide(out) = nitric oxide(in)</text>
        <dbReference type="Rhea" id="RHEA:74895"/>
        <dbReference type="ChEBI" id="CHEBI:16480"/>
    </reaction>
</comment>
<comment type="catalytic activity">
    <reaction evidence="25 26">
        <text>CO2(out) = CO2(in)</text>
        <dbReference type="Rhea" id="RHEA:74891"/>
        <dbReference type="ChEBI" id="CHEBI:16526"/>
    </reaction>
</comment>
<comment type="catalytic activity">
    <reaction evidence="30">
        <text>glycerol(in) = glycerol(out)</text>
        <dbReference type="Rhea" id="RHEA:29675"/>
        <dbReference type="ChEBI" id="CHEBI:17754"/>
    </reaction>
</comment>
<comment type="catalytic activity">
    <reaction evidence="27">
        <text>H2O2(out) = H2O2(in)</text>
        <dbReference type="Rhea" id="RHEA:74375"/>
        <dbReference type="ChEBI" id="CHEBI:16240"/>
    </reaction>
</comment>
<comment type="catalytic activity">
    <reaction evidence="29 31">
        <text>K(+)(in) = K(+)(out)</text>
        <dbReference type="Rhea" id="RHEA:29463"/>
        <dbReference type="ChEBI" id="CHEBI:29103"/>
    </reaction>
</comment>
<comment type="catalytic activity">
    <reaction evidence="29">
        <text>Na(+)(in) = Na(+)(out)</text>
        <dbReference type="Rhea" id="RHEA:34963"/>
        <dbReference type="ChEBI" id="CHEBI:29101"/>
    </reaction>
</comment>
<comment type="activity regulation">
    <text evidence="16 17">The water channel activity is inhibited by P-choloromercuribenzene sulphonate and diethylpyrocarbonate(DPPC) (PubMed:8584435). The glycerol channel activity is inhibited by P-choloromercuribenzene sulphonate, diethylpyrocarbonate(DPPC), phloretin and Cu(2+) (PubMed:8584435). Inhibited by mercury (PubMed:7677994).</text>
</comment>
<comment type="subunit">
    <text evidence="1 2 9 11">Homotetramer; each monomer provides an independent water pore (PubMed:11171962, PubMed:35835865). Component of the ankyrin-1 complex in the erythrocyte, composed of ANK1, RHCE, RHAG, SLC4A1, EPB42, GYPA, GYPB and AQP1 (PubMed:35835865). Interacts with EPHB2; involved in endolymph production in the inner ear (By similarity). Identified in a complex with STOM (PubMed:23219802). Interacts (via the N-terminal) with ANK1 (via ANK 1-5 repeats) (PubMed:35835865). Interacts (via the C-terminal) with EPB42 (PubMed:35835865).</text>
</comment>
<comment type="interaction">
    <interactant intactId="EBI-745213">
        <id>P29972</id>
    </interactant>
    <interactant intactId="EBI-17286414">
        <id>A2BDD9</id>
        <label>AMOT</label>
    </interactant>
    <organismsDiffer>false</organismsDiffer>
    <experiments>3</experiments>
</comment>
<comment type="interaction">
    <interactant intactId="EBI-745213">
        <id>P29972</id>
    </interactant>
    <interactant intactId="EBI-745213">
        <id>P29972</id>
        <label>AQP1</label>
    </interactant>
    <organismsDiffer>false</organismsDiffer>
    <experiments>3</experiments>
</comment>
<comment type="interaction">
    <interactant intactId="EBI-745213">
        <id>P29972</id>
    </interactant>
    <interactant intactId="EBI-13059134">
        <id>Q13520</id>
        <label>AQP6</label>
    </interactant>
    <organismsDiffer>false</organismsDiffer>
    <experiments>3</experiments>
</comment>
<comment type="interaction">
    <interactant intactId="EBI-745213">
        <id>P29972</id>
    </interactant>
    <interactant intactId="EBI-747430">
        <id>Q9BXK5</id>
        <label>BCL2L13</label>
    </interactant>
    <organismsDiffer>false</organismsDiffer>
    <experiments>3</experiments>
</comment>
<comment type="interaction">
    <interactant intactId="EBI-745213">
        <id>P29972</id>
    </interactant>
    <interactant intactId="EBI-742722">
        <id>Q9BUH8</id>
        <label>BEGAIN</label>
    </interactant>
    <organismsDiffer>false</organismsDiffer>
    <experiments>3</experiments>
</comment>
<comment type="interaction">
    <interactant intactId="EBI-745213">
        <id>P29972</id>
    </interactant>
    <interactant intactId="EBI-2548012">
        <id>Q9H2G9</id>
        <label>BLZF1</label>
    </interactant>
    <organismsDiffer>false</organismsDiffer>
    <experiments>3</experiments>
</comment>
<comment type="interaction">
    <interactant intactId="EBI-745213">
        <id>P29972</id>
    </interactant>
    <interactant intactId="EBI-3919268">
        <id>Q96LC9</id>
        <label>BMF</label>
    </interactant>
    <organismsDiffer>false</organismsDiffer>
    <experiments>3</experiments>
</comment>
<comment type="interaction">
    <interactant intactId="EBI-745213">
        <id>P29972</id>
    </interactant>
    <interactant intactId="EBI-10171416">
        <id>Q96JN2-2</id>
        <label>CCDC136</label>
    </interactant>
    <organismsDiffer>false</organismsDiffer>
    <experiments>3</experiments>
</comment>
<comment type="interaction">
    <interactant intactId="EBI-745213">
        <id>P29972</id>
    </interactant>
    <interactant intactId="EBI-2808286">
        <id>Q2TAC2</id>
        <label>CCDC57</label>
    </interactant>
    <organismsDiffer>false</organismsDiffer>
    <experiments>3</experiments>
</comment>
<comment type="interaction">
    <interactant intactId="EBI-745213">
        <id>P29972</id>
    </interactant>
    <interactant intactId="EBI-748961">
        <id>O95273</id>
        <label>CCNDBP1</label>
    </interactant>
    <organismsDiffer>false</organismsDiffer>
    <experiments>3</experiments>
</comment>
<comment type="interaction">
    <interactant intactId="EBI-745213">
        <id>P29972</id>
    </interactant>
    <interactant intactId="EBI-7797864">
        <id>P11912</id>
        <label>CD79A</label>
    </interactant>
    <organismsDiffer>false</organismsDiffer>
    <experiments>3</experiments>
</comment>
<comment type="interaction">
    <interactant intactId="EBI-745213">
        <id>P29972</id>
    </interactant>
    <interactant intactId="EBI-1181367">
        <id>Q01850</id>
        <label>CDR2</label>
    </interactant>
    <organismsDiffer>false</organismsDiffer>
    <experiments>3</experiments>
</comment>
<comment type="interaction">
    <interactant intactId="EBI-745213">
        <id>P29972</id>
    </interactant>
    <interactant intactId="EBI-744115">
        <id>Q9C0F1</id>
        <label>CEP44</label>
    </interactant>
    <organismsDiffer>false</organismsDiffer>
    <experiments>3</experiments>
</comment>
<comment type="interaction">
    <interactant intactId="EBI-745213">
        <id>P29972</id>
    </interactant>
    <interactant intactId="EBI-18400628">
        <id>O00501</id>
        <label>CLDN5</label>
    </interactant>
    <organismsDiffer>false</organismsDiffer>
    <experiments>3</experiments>
</comment>
<comment type="interaction">
    <interactant intactId="EBI-745213">
        <id>P29972</id>
    </interactant>
    <interactant intactId="EBI-2531022">
        <id>P49747</id>
        <label>COMP</label>
    </interactant>
    <organismsDiffer>false</organismsDiffer>
    <experiments>3</experiments>
</comment>
<comment type="interaction">
    <interactant intactId="EBI-745213">
        <id>P29972</id>
    </interactant>
    <interactant intactId="EBI-18013275">
        <id>Q7Z7G2</id>
        <label>CPLX4</label>
    </interactant>
    <organismsDiffer>false</organismsDiffer>
    <experiments>3</experiments>
</comment>
<comment type="interaction">
    <interactant intactId="EBI-745213">
        <id>P29972</id>
    </interactant>
    <interactant intactId="EBI-625022">
        <id>O43889-2</id>
        <label>CREB3</label>
    </interactant>
    <organismsDiffer>false</organismsDiffer>
    <experiments>3</experiments>
</comment>
<comment type="interaction">
    <interactant intactId="EBI-745213">
        <id>P29972</id>
    </interactant>
    <interactant intactId="EBI-10205543">
        <id>Q9NQ79</id>
        <label>CRTAC1</label>
    </interactant>
    <organismsDiffer>false</organismsDiffer>
    <experiments>3</experiments>
</comment>
<comment type="interaction">
    <interactant intactId="EBI-745213">
        <id>P29972</id>
    </interactant>
    <interactant intactId="EBI-4311573">
        <id>Q96S65</id>
        <label>CSRNP1</label>
    </interactant>
    <organismsDiffer>false</organismsDiffer>
    <experiments>3</experiments>
</comment>
<comment type="interaction">
    <interactant intactId="EBI-745213">
        <id>P29972</id>
    </interactant>
    <interactant intactId="EBI-3867333">
        <id>A8MQ03</id>
        <label>CYSRT1</label>
    </interactant>
    <organismsDiffer>false</organismsDiffer>
    <experiments>3</experiments>
</comment>
<comment type="interaction">
    <interactant intactId="EBI-745213">
        <id>P29972</id>
    </interactant>
    <interactant intactId="EBI-12260294">
        <id>Q9NQ30</id>
        <label>ESM1</label>
    </interactant>
    <organismsDiffer>false</organismsDiffer>
    <experiments>3</experiments>
</comment>
<comment type="interaction">
    <interactant intactId="EBI-745213">
        <id>P29972</id>
    </interactant>
    <interactant intactId="EBI-17640610">
        <id>P34910-2</id>
        <label>EVI2B</label>
    </interactant>
    <organismsDiffer>false</organismsDiffer>
    <experiments>3</experiments>
</comment>
<comment type="interaction">
    <interactant intactId="EBI-745213">
        <id>P29972</id>
    </interactant>
    <interactant intactId="EBI-719941">
        <id>Q3B820</id>
        <label>FAM161A</label>
    </interactant>
    <organismsDiffer>false</organismsDiffer>
    <experiments>3</experiments>
</comment>
<comment type="interaction">
    <interactant intactId="EBI-745213">
        <id>P29972</id>
    </interactant>
    <interactant intactId="EBI-18304435">
        <id>Q5JX71</id>
        <label>FAM209A</label>
    </interactant>
    <organismsDiffer>false</organismsDiffer>
    <experiments>3</experiments>
</comment>
<comment type="interaction">
    <interactant intactId="EBI-745213">
        <id>P29972</id>
    </interactant>
    <interactant intactId="EBI-12142257">
        <id>Q8TBE3</id>
        <label>FNDC9</label>
    </interactant>
    <organismsDiffer>false</organismsDiffer>
    <experiments>3</experiments>
</comment>
<comment type="interaction">
    <interactant intactId="EBI-745213">
        <id>P29972</id>
    </interactant>
    <interactant intactId="EBI-10198738">
        <id>Q6FG41</id>
        <label>FOS</label>
    </interactant>
    <organismsDiffer>false</organismsDiffer>
    <experiments>3</experiments>
</comment>
<comment type="interaction">
    <interactant intactId="EBI-745213">
        <id>P29972</id>
    </interactant>
    <interactant intactId="EBI-5661036">
        <id>A1L4K1</id>
        <label>FSD2</label>
    </interactant>
    <organismsDiffer>false</organismsDiffer>
    <experiments>3</experiments>
</comment>
<comment type="interaction">
    <interactant intactId="EBI-745213">
        <id>P29972</id>
    </interactant>
    <interactant intactId="EBI-18908258">
        <id>O00258</id>
        <label>GET1</label>
    </interactant>
    <organismsDiffer>false</organismsDiffer>
    <experiments>3</experiments>
</comment>
<comment type="interaction">
    <interactant intactId="EBI-745213">
        <id>P29972</id>
    </interactant>
    <interactant intactId="EBI-3909454">
        <id>O95377</id>
        <label>GJB5</label>
    </interactant>
    <organismsDiffer>false</organismsDiffer>
    <experiments>3</experiments>
</comment>
<comment type="interaction">
    <interactant intactId="EBI-745213">
        <id>P29972</id>
    </interactant>
    <interactant intactId="EBI-308084">
        <id>P08151</id>
        <label>GLI1</label>
    </interactant>
    <organismsDiffer>false</organismsDiffer>
    <experiments>3</experiments>
</comment>
<comment type="interaction">
    <interactant intactId="EBI-745213">
        <id>P29972</id>
    </interactant>
    <interactant intactId="EBI-618309">
        <id>Q08379</id>
        <label>GOLGA2</label>
    </interactant>
    <organismsDiffer>false</organismsDiffer>
    <experiments>3</experiments>
</comment>
<comment type="interaction">
    <interactant intactId="EBI-745213">
        <id>P29972</id>
    </interactant>
    <interactant intactId="EBI-2927498">
        <id>O60883</id>
        <label>GPR37L1</label>
    </interactant>
    <organismsDiffer>false</organismsDiffer>
    <experiments>3</experiments>
</comment>
<comment type="interaction">
    <interactant intactId="EBI-745213">
        <id>P29972</id>
    </interactant>
    <interactant intactId="EBI-11519926">
        <id>Q6PI77</id>
        <label>GPRASP3</label>
    </interactant>
    <organismsDiffer>false</organismsDiffer>
    <experiments>3</experiments>
</comment>
<comment type="interaction">
    <interactant intactId="EBI-745213">
        <id>P29972</id>
    </interactant>
    <interactant intactId="EBI-11721746">
        <id>Q8TED1</id>
        <label>GPX8</label>
    </interactant>
    <organismsDiffer>false</organismsDiffer>
    <experiments>3</experiments>
</comment>
<comment type="interaction">
    <interactant intactId="EBI-745213">
        <id>P29972</id>
    </interactant>
    <interactant intactId="EBI-9091197">
        <id>Q8IY31-3</id>
        <label>IFT20</label>
    </interactant>
    <organismsDiffer>false</organismsDiffer>
    <experiments>3</experiments>
</comment>
<comment type="interaction">
    <interactant intactId="EBI-745213">
        <id>P29972</id>
    </interactant>
    <interactant intactId="EBI-947015">
        <id>P24592</id>
        <label>IGFBP6</label>
    </interactant>
    <organismsDiffer>false</organismsDiffer>
    <experiments>3</experiments>
</comment>
<comment type="interaction">
    <interactant intactId="EBI-745213">
        <id>P29972</id>
    </interactant>
    <interactant intactId="EBI-8638439">
        <id>Q8IYA8</id>
        <label>IHO1</label>
    </interactant>
    <organismsDiffer>false</organismsDiffer>
    <experiments>3</experiments>
</comment>
<comment type="interaction">
    <interactant intactId="EBI-745213">
        <id>P29972</id>
    </interactant>
    <interactant intactId="EBI-3893057">
        <id>Q9UKS7</id>
        <label>IKZF2</label>
    </interactant>
    <organismsDiffer>false</organismsDiffer>
    <experiments>3</experiments>
</comment>
<comment type="interaction">
    <interactant intactId="EBI-745213">
        <id>P29972</id>
    </interactant>
    <interactant intactId="EBI-747204">
        <id>Q9UKT9</id>
        <label>IKZF3</label>
    </interactant>
    <organismsDiffer>false</organismsDiffer>
    <experiments>6</experiments>
</comment>
<comment type="interaction">
    <interactant intactId="EBI-745213">
        <id>P29972</id>
    </interactant>
    <interactant intactId="EBI-12558959">
        <id>Q9HBE5</id>
        <label>IL21R</label>
    </interactant>
    <organismsDiffer>false</organismsDiffer>
    <experiments>3</experiments>
</comment>
<comment type="interaction">
    <interactant intactId="EBI-745213">
        <id>P29972</id>
    </interactant>
    <interactant intactId="EBI-3934936">
        <id>O95279</id>
        <label>KCNK5</label>
    </interactant>
    <organismsDiffer>false</organismsDiffer>
    <experiments>3</experiments>
</comment>
<comment type="interaction">
    <interactant intactId="EBI-745213">
        <id>P29972</id>
    </interactant>
    <interactant intactId="EBI-4397613">
        <id>Q7L273</id>
        <label>KCTD9</label>
    </interactant>
    <organismsDiffer>false</organismsDiffer>
    <experiments>3</experiments>
</comment>
<comment type="interaction">
    <interactant intactId="EBI-745213">
        <id>P29972</id>
    </interactant>
    <interactant intactId="EBI-722504">
        <id>O75525</id>
        <label>KHDRBS3</label>
    </interactant>
    <organismsDiffer>false</organismsDiffer>
    <experiments>3</experiments>
</comment>
<comment type="interaction">
    <interactant intactId="EBI-745213">
        <id>P29972</id>
    </interactant>
    <interactant intactId="EBI-10181113">
        <id>Q8N8K9</id>
        <label>KIAA1958</label>
    </interactant>
    <organismsDiffer>false</organismsDiffer>
    <experiments>3</experiments>
</comment>
<comment type="interaction">
    <interactant intactId="EBI-745213">
        <id>P29972</id>
    </interactant>
    <interactant intactId="EBI-724915">
        <id>Q53HC5</id>
        <label>KLHL26</label>
    </interactant>
    <organismsDiffer>false</organismsDiffer>
    <experiments>3</experiments>
</comment>
<comment type="interaction">
    <interactant intactId="EBI-745213">
        <id>P29972</id>
    </interactant>
    <interactant intactId="EBI-948001">
        <id>Q15323</id>
        <label>KRT31</label>
    </interactant>
    <organismsDiffer>false</organismsDiffer>
    <experiments>3</experiments>
</comment>
<comment type="interaction">
    <interactant intactId="EBI-745213">
        <id>P29972</id>
    </interactant>
    <interactant intactId="EBI-1049638">
        <id>Q14525</id>
        <label>KRT33B</label>
    </interactant>
    <organismsDiffer>false</organismsDiffer>
    <experiments>3</experiments>
</comment>
<comment type="interaction">
    <interactant intactId="EBI-745213">
        <id>P29972</id>
    </interactant>
    <interactant intactId="EBI-1045716">
        <id>O76014</id>
        <label>KRT37</label>
    </interactant>
    <organismsDiffer>false</organismsDiffer>
    <experiments>3</experiments>
</comment>
<comment type="interaction">
    <interactant intactId="EBI-745213">
        <id>P29972</id>
    </interactant>
    <interactant intactId="EBI-10171697">
        <id>Q6A162</id>
        <label>KRT40</label>
    </interactant>
    <organismsDiffer>false</organismsDiffer>
    <experiments>3</experiments>
</comment>
<comment type="interaction">
    <interactant intactId="EBI-745213">
        <id>P29972</id>
    </interactant>
    <interactant intactId="EBI-11959885">
        <id>Q07627</id>
        <label>KRTAP1-1</label>
    </interactant>
    <organismsDiffer>false</organismsDiffer>
    <experiments>3</experiments>
</comment>
<comment type="interaction">
    <interactant intactId="EBI-745213">
        <id>P29972</id>
    </interactant>
    <interactant intactId="EBI-11741292">
        <id>Q9BYS1</id>
        <label>KRTAP1-5</label>
    </interactant>
    <organismsDiffer>false</organismsDiffer>
    <experiments>3</experiments>
</comment>
<comment type="interaction">
    <interactant intactId="EBI-745213">
        <id>P29972</id>
    </interactant>
    <interactant intactId="EBI-10172290">
        <id>P60409</id>
        <label>KRTAP10-7</label>
    </interactant>
    <organismsDiffer>false</organismsDiffer>
    <experiments>3</experiments>
</comment>
<comment type="interaction">
    <interactant intactId="EBI-745213">
        <id>P29972</id>
    </interactant>
    <interactant intactId="EBI-10171774">
        <id>P60410</id>
        <label>KRTAP10-8</label>
    </interactant>
    <organismsDiffer>false</organismsDiffer>
    <experiments>3</experiments>
</comment>
<comment type="interaction">
    <interactant intactId="EBI-745213">
        <id>P29972</id>
    </interactant>
    <interactant intactId="EBI-10176396">
        <id>P60329</id>
        <label>KRTAP12-4</label>
    </interactant>
    <organismsDiffer>false</organismsDiffer>
    <experiments>3</experiments>
</comment>
<comment type="interaction">
    <interactant intactId="EBI-745213">
        <id>P29972</id>
    </interactant>
    <interactant intactId="EBI-751260">
        <id>Q9BYR7</id>
        <label>KRTAP3-2</label>
    </interactant>
    <organismsDiffer>false</organismsDiffer>
    <experiments>3</experiments>
</comment>
<comment type="interaction">
    <interactant intactId="EBI-745213">
        <id>P29972</id>
    </interactant>
    <interactant intactId="EBI-10172511">
        <id>Q9BYR5</id>
        <label>KRTAP4-2</label>
    </interactant>
    <organismsDiffer>false</organismsDiffer>
    <experiments>6</experiments>
</comment>
<comment type="interaction">
    <interactant intactId="EBI-745213">
        <id>P29972</id>
    </interactant>
    <interactant intactId="EBI-11958132">
        <id>Q9BYR3</id>
        <label>KRTAP4-4</label>
    </interactant>
    <organismsDiffer>false</organismsDiffer>
    <experiments>3</experiments>
</comment>
<comment type="interaction">
    <interactant intactId="EBI-745213">
        <id>P29972</id>
    </interactant>
    <interactant intactId="EBI-11962084">
        <id>Q3LI66</id>
        <label>KRTAP6-2</label>
    </interactant>
    <organismsDiffer>false</organismsDiffer>
    <experiments>3</experiments>
</comment>
<comment type="interaction">
    <interactant intactId="EBI-745213">
        <id>P29972</id>
    </interactant>
    <interactant intactId="EBI-1044640">
        <id>Q9BYQ4</id>
        <label>KRTAP9-2</label>
    </interactant>
    <organismsDiffer>false</organismsDiffer>
    <experiments>3</experiments>
</comment>
<comment type="interaction">
    <interactant intactId="EBI-745213">
        <id>P29972</id>
    </interactant>
    <interactant intactId="EBI-11958364">
        <id>Q9BYQ0</id>
        <label>KRTAP9-8</label>
    </interactant>
    <organismsDiffer>false</organismsDiffer>
    <experiments>3</experiments>
</comment>
<comment type="interaction">
    <interactant intactId="EBI-745213">
        <id>P29972</id>
    </interactant>
    <interactant intactId="EBI-11962058">
        <id>Q5T7P2</id>
        <label>LCE1A</label>
    </interactant>
    <organismsDiffer>false</organismsDiffer>
    <experiments>3</experiments>
</comment>
<comment type="interaction">
    <interactant intactId="EBI-745213">
        <id>P29972</id>
    </interactant>
    <interactant intactId="EBI-10173166">
        <id>Q5T700</id>
        <label>LDLRAD1</label>
    </interactant>
    <organismsDiffer>false</organismsDiffer>
    <experiments>3</experiments>
</comment>
<comment type="interaction">
    <interactant intactId="EBI-745213">
        <id>P29972</id>
    </interactant>
    <interactant intactId="EBI-740738">
        <id>O95751</id>
        <label>LDOC1</label>
    </interactant>
    <organismsDiffer>false</organismsDiffer>
    <experiments>3</experiments>
</comment>
<comment type="interaction">
    <interactant intactId="EBI-745213">
        <id>P29972</id>
    </interactant>
    <interactant intactId="EBI-2830566">
        <id>Q9H400</id>
        <label>LIME1</label>
    </interactant>
    <organismsDiffer>false</organismsDiffer>
    <experiments>3</experiments>
</comment>
<comment type="interaction">
    <interactant intactId="EBI-745213">
        <id>P29972</id>
    </interactant>
    <interactant intactId="EBI-744222">
        <id>O60711</id>
        <label>LPXN</label>
    </interactant>
    <organismsDiffer>false</organismsDiffer>
    <experiments>3</experiments>
</comment>
<comment type="interaction">
    <interactant intactId="EBI-745213">
        <id>P29972</id>
    </interactant>
    <interactant intactId="EBI-358888">
        <id>Q96AG4</id>
        <label>LRRC59</label>
    </interactant>
    <organismsDiffer>false</organismsDiffer>
    <experiments>3</experiments>
</comment>
<comment type="interaction">
    <interactant intactId="EBI-745213">
        <id>P29972</id>
    </interactant>
    <interactant intactId="EBI-724076">
        <id>Q99750</id>
        <label>MDFI</label>
    </interactant>
    <organismsDiffer>false</organismsDiffer>
    <experiments>7</experiments>
</comment>
<comment type="interaction">
    <interactant intactId="EBI-745213">
        <id>P29972</id>
    </interactant>
    <interactant intactId="EBI-724754">
        <id>O14880</id>
        <label>MGST3</label>
    </interactant>
    <organismsDiffer>false</organismsDiffer>
    <experiments>3</experiments>
</comment>
<comment type="interaction">
    <interactant intactId="EBI-745213">
        <id>P29972</id>
    </interactant>
    <interactant intactId="EBI-10172526">
        <id>Q9UJV3-2</id>
        <label>MID2</label>
    </interactant>
    <organismsDiffer>false</organismsDiffer>
    <experiments>3</experiments>
</comment>
<comment type="interaction">
    <interactant intactId="EBI-745213">
        <id>P29972</id>
    </interactant>
    <interactant intactId="EBI-9118295">
        <id>A9UHW6-2</id>
        <label>MIF4GD</label>
    </interactant>
    <organismsDiffer>false</organismsDiffer>
    <experiments>3</experiments>
</comment>
<comment type="interaction">
    <interactant intactId="EBI-745213">
        <id>P29972</id>
    </interactant>
    <interactant intactId="EBI-2340269">
        <id>Q13064</id>
        <label>MKRN3</label>
    </interactant>
    <organismsDiffer>false</organismsDiffer>
    <experiments>3</experiments>
</comment>
<comment type="interaction">
    <interactant intactId="EBI-745213">
        <id>P29972</id>
    </interactant>
    <interactant intactId="EBI-5454865">
        <id>Q6IN84</id>
        <label>MRM1</label>
    </interactant>
    <organismsDiffer>false</organismsDiffer>
    <experiments>3</experiments>
</comment>
<comment type="interaction">
    <interactant intactId="EBI-745213">
        <id>P29972</id>
    </interactant>
    <interactant intactId="EBI-742948">
        <id>Q5JR59</id>
        <label>MTUS2</label>
    </interactant>
    <organismsDiffer>false</organismsDiffer>
    <experiments>3</experiments>
</comment>
<comment type="interaction">
    <interactant intactId="EBI-745213">
        <id>P29972</id>
    </interactant>
    <interactant intactId="EBI-11522433">
        <id>Q5JR59-3</id>
        <label>MTUS2</label>
    </interactant>
    <organismsDiffer>false</organismsDiffer>
    <experiments>3</experiments>
</comment>
<comment type="interaction">
    <interactant intactId="EBI-745213">
        <id>P29972</id>
    </interactant>
    <interactant intactId="EBI-17263240">
        <id>P15941-11</id>
        <label>MUC1</label>
    </interactant>
    <organismsDiffer>false</organismsDiffer>
    <experiments>3</experiments>
</comment>
<comment type="interaction">
    <interactant intactId="EBI-745213">
        <id>P29972</id>
    </interactant>
    <interactant intactId="EBI-17491620">
        <id>P13349</id>
        <label>MYF5</label>
    </interactant>
    <organismsDiffer>false</organismsDiffer>
    <experiments>3</experiments>
</comment>
<comment type="interaction">
    <interactant intactId="EBI-745213">
        <id>P29972</id>
    </interactant>
    <interactant intactId="EBI-945833">
        <id>Q7Z3S9</id>
        <label>NOTCH2NLA</label>
    </interactant>
    <organismsDiffer>false</organismsDiffer>
    <experiments>3</experiments>
</comment>
<comment type="interaction">
    <interactant intactId="EBI-745213">
        <id>P29972</id>
    </interactant>
    <interactant intactId="EBI-22310682">
        <id>P0DPK4</id>
        <label>NOTCH2NLC</label>
    </interactant>
    <organismsDiffer>false</organismsDiffer>
    <experiments>3</experiments>
</comment>
<comment type="interaction">
    <interactant intactId="EBI-745213">
        <id>P29972</id>
    </interactant>
    <interactant intactId="EBI-12813581">
        <id>Q9NXJ5-2</id>
        <label>PGPEP1</label>
    </interactant>
    <organismsDiffer>false</organismsDiffer>
    <experiments>3</experiments>
</comment>
<comment type="interaction">
    <interactant intactId="EBI-745213">
        <id>P29972</id>
    </interactant>
    <interactant intactId="EBI-726466">
        <id>O15496</id>
        <label>PLA2G10</label>
    </interactant>
    <organismsDiffer>false</organismsDiffer>
    <experiments>3</experiments>
</comment>
<comment type="interaction">
    <interactant intactId="EBI-745213">
        <id>P29972</id>
    </interactant>
    <interactant intactId="EBI-3937430">
        <id>Q9NRY7</id>
        <label>PLSCR2</label>
    </interactant>
    <organismsDiffer>false</organismsDiffer>
    <experiments>3</experiments>
</comment>
<comment type="interaction">
    <interactant intactId="EBI-745213">
        <id>P29972</id>
    </interactant>
    <interactant intactId="EBI-3957793">
        <id>Q9GZV8</id>
        <label>PRDM14</label>
    </interactant>
    <organismsDiffer>false</organismsDiffer>
    <experiments>3</experiments>
</comment>
<comment type="interaction">
    <interactant intactId="EBI-745213">
        <id>P29972</id>
    </interactant>
    <interactant intactId="EBI-11320284">
        <id>Q9NQX0</id>
        <label>PRDM6</label>
    </interactant>
    <organismsDiffer>false</organismsDiffer>
    <experiments>3</experiments>
</comment>
<comment type="interaction">
    <interactant intactId="EBI-745213">
        <id>P29972</id>
    </interactant>
    <interactant intactId="EBI-1210429">
        <id>Q9NYW8</id>
        <label>RBAK</label>
    </interactant>
    <organismsDiffer>false</organismsDiffer>
    <experiments>3</experiments>
</comment>
<comment type="interaction">
    <interactant intactId="EBI-745213">
        <id>P29972</id>
    </interactant>
    <interactant intactId="EBI-10829018">
        <id>Q04864-2</id>
        <label>REL</label>
    </interactant>
    <organismsDiffer>false</organismsDiffer>
    <experiments>3</experiments>
</comment>
<comment type="interaction">
    <interactant intactId="EBI-745213">
        <id>P29972</id>
    </interactant>
    <interactant intactId="EBI-3918154">
        <id>Q9UGC6</id>
        <label>RGS17</label>
    </interactant>
    <organismsDiffer>false</organismsDiffer>
    <experiments>6</experiments>
</comment>
<comment type="interaction">
    <interactant intactId="EBI-745213">
        <id>P29972</id>
    </interactant>
    <interactant intactId="EBI-1052678">
        <id>O76081</id>
        <label>RGS20</label>
    </interactant>
    <organismsDiffer>false</organismsDiffer>
    <experiments>3</experiments>
</comment>
<comment type="interaction">
    <interactant intactId="EBI-745213">
        <id>P29972</id>
    </interactant>
    <interactant intactId="EBI-10178530">
        <id>O76081-6</id>
        <label>RGS20</label>
    </interactant>
    <organismsDiffer>false</organismsDiffer>
    <experiments>3</experiments>
</comment>
<comment type="interaction">
    <interactant intactId="EBI-745213">
        <id>P29972</id>
    </interactant>
    <interactant intactId="EBI-10182375">
        <id>Q9UFD9</id>
        <label>RIMBP3</label>
    </interactant>
    <organismsDiffer>false</organismsDiffer>
    <experiments>3</experiments>
</comment>
<comment type="interaction">
    <interactant intactId="EBI-745213">
        <id>P29972</id>
    </interactant>
    <interactant intactId="EBI-2129998">
        <id>Q9H9V4</id>
        <label>RNF122</label>
    </interactant>
    <organismsDiffer>false</organismsDiffer>
    <experiments>3</experiments>
</comment>
<comment type="interaction">
    <interactant intactId="EBI-745213">
        <id>P29972</id>
    </interactant>
    <interactant intactId="EBI-3920694">
        <id>Q9NR31</id>
        <label>SAR1A</label>
    </interactant>
    <organismsDiffer>false</organismsDiffer>
    <experiments>3</experiments>
</comment>
<comment type="interaction">
    <interactant intactId="EBI-745213">
        <id>P29972</id>
    </interactant>
    <interactant intactId="EBI-747107">
        <id>Q8IUQ4</id>
        <label>SIAH1</label>
    </interactant>
    <organismsDiffer>false</organismsDiffer>
    <experiments>3</experiments>
</comment>
<comment type="interaction">
    <interactant intactId="EBI-745213">
        <id>P29972</id>
    </interactant>
    <interactant intactId="EBI-12372219">
        <id>O15304-2</id>
        <label>SIVA1</label>
    </interactant>
    <organismsDiffer>false</organismsDiffer>
    <experiments>3</experiments>
</comment>
<comment type="interaction">
    <interactant intactId="EBI-745213">
        <id>P29972</id>
    </interactant>
    <interactant intactId="EBI-12806032">
        <id>Q16348</id>
        <label>SLC15A2</label>
    </interactant>
    <organismsDiffer>false</organismsDiffer>
    <experiments>3</experiments>
</comment>
<comment type="interaction">
    <interactant intactId="EBI-745213">
        <id>P29972</id>
    </interactant>
    <interactant intactId="EBI-12898013">
        <id>Q9NP94</id>
        <label>SLC39A2</label>
    </interactant>
    <organismsDiffer>false</organismsDiffer>
    <experiments>3</experiments>
</comment>
<comment type="interaction">
    <interactant intactId="EBI-745213">
        <id>P29972</id>
    </interactant>
    <interactant intactId="EBI-7125479">
        <id>Q5MJ70</id>
        <label>SPDYA</label>
    </interactant>
    <organismsDiffer>false</organismsDiffer>
    <experiments>3</experiments>
</comment>
<comment type="interaction">
    <interactant intactId="EBI-745213">
        <id>P29972</id>
    </interactant>
    <interactant intactId="EBI-5235340">
        <id>Q7Z699</id>
        <label>SPRED1</label>
    </interactant>
    <organismsDiffer>false</organismsDiffer>
    <experiments>3</experiments>
</comment>
<comment type="interaction">
    <interactant intactId="EBI-745213">
        <id>P29972</id>
    </interactant>
    <interactant intactId="EBI-7082156">
        <id>Q7Z698</id>
        <label>SPRED2</label>
    </interactant>
    <organismsDiffer>false</organismsDiffer>
    <experiments>3</experiments>
</comment>
<comment type="interaction">
    <interactant intactId="EBI-745213">
        <id>P29972</id>
    </interactant>
    <interactant intactId="EBI-742487">
        <id>O43597</id>
        <label>SPRY2</label>
    </interactant>
    <organismsDiffer>false</organismsDiffer>
    <experiments>3</experiments>
</comment>
<comment type="interaction">
    <interactant intactId="EBI-745213">
        <id>P29972</id>
    </interactant>
    <interactant intactId="EBI-12290641">
        <id>O43610</id>
        <label>SPRY3</label>
    </interactant>
    <organismsDiffer>false</organismsDiffer>
    <experiments>3</experiments>
</comment>
<comment type="interaction">
    <interactant intactId="EBI-745213">
        <id>P29972</id>
    </interactant>
    <interactant intactId="EBI-12408727">
        <id>Q5W111-2</id>
        <label>SPRYD7</label>
    </interactant>
    <organismsDiffer>false</organismsDiffer>
    <experiments>3</experiments>
</comment>
<comment type="interaction">
    <interactant intactId="EBI-745213">
        <id>P29972</id>
    </interactant>
    <interactant intactId="EBI-17280858">
        <id>Q8WWF3</id>
        <label>SSMEM1</label>
    </interactant>
    <organismsDiffer>false</organismsDiffer>
    <experiments>3</experiments>
</comment>
<comment type="interaction">
    <interactant intactId="EBI-745213">
        <id>P29972</id>
    </interactant>
    <interactant intactId="EBI-533224">
        <id>P15884</id>
        <label>TCF4</label>
    </interactant>
    <organismsDiffer>false</organismsDiffer>
    <experiments>3</experiments>
</comment>
<comment type="interaction">
    <interactant intactId="EBI-745213">
        <id>P29972</id>
    </interactant>
    <interactant intactId="EBI-10982110">
        <id>Q96Q45-2</id>
        <label>TMEM237</label>
    </interactant>
    <organismsDiffer>false</organismsDiffer>
    <experiments>3</experiments>
</comment>
<comment type="interaction">
    <interactant intactId="EBI-745213">
        <id>P29972</id>
    </interactant>
    <interactant intactId="EBI-1055114">
        <id>Q9NVV0</id>
        <label>TMEM38B</label>
    </interactant>
    <organismsDiffer>false</organismsDiffer>
    <experiments>3</experiments>
</comment>
<comment type="interaction">
    <interactant intactId="EBI-745213">
        <id>P29972</id>
    </interactant>
    <interactant intactId="EBI-3923061">
        <id>Q96B21</id>
        <label>TMEM45B</label>
    </interactant>
    <organismsDiffer>false</organismsDiffer>
    <experiments>3</experiments>
</comment>
<comment type="interaction">
    <interactant intactId="EBI-745213">
        <id>P29972</id>
    </interactant>
    <interactant intactId="EBI-11742770">
        <id>Q96HE8</id>
        <label>TMEM80</label>
    </interactant>
    <organismsDiffer>false</organismsDiffer>
    <experiments>3</experiments>
</comment>
<comment type="interaction">
    <interactant intactId="EBI-745213">
        <id>P29972</id>
    </interactant>
    <interactant intactId="EBI-12345267">
        <id>O15393-2</id>
        <label>TMPRSS2</label>
    </interactant>
    <organismsDiffer>false</organismsDiffer>
    <experiments>3</experiments>
</comment>
<comment type="interaction">
    <interactant intactId="EBI-745213">
        <id>P29972</id>
    </interactant>
    <interactant intactId="EBI-603457">
        <id>Q07912</id>
        <label>TNK2</label>
    </interactant>
    <organismsDiffer>false</organismsDiffer>
    <experiments>3</experiments>
</comment>
<comment type="interaction">
    <interactant intactId="EBI-745213">
        <id>P29972</id>
    </interactant>
    <interactant intactId="EBI-949753">
        <id>Q63HR2</id>
        <label>TNS2</label>
    </interactant>
    <organismsDiffer>false</organismsDiffer>
    <experiments>3</experiments>
</comment>
<comment type="interaction">
    <interactant intactId="EBI-745213">
        <id>P29972</id>
    </interactant>
    <interactant intactId="EBI-359224">
        <id>Q13077</id>
        <label>TRAF1</label>
    </interactant>
    <organismsDiffer>false</organismsDiffer>
    <experiments>3</experiments>
</comment>
<comment type="interaction">
    <interactant intactId="EBI-745213">
        <id>P29972</id>
    </interactant>
    <interactant intactId="EBI-355744">
        <id>Q12933</id>
        <label>TRAF2</label>
    </interactant>
    <organismsDiffer>false</organismsDiffer>
    <experiments>3</experiments>
</comment>
<comment type="interaction">
    <interactant intactId="EBI-745213">
        <id>P29972</id>
    </interactant>
    <interactant intactId="EBI-740098">
        <id>P36406</id>
        <label>TRIM23</label>
    </interactant>
    <organismsDiffer>false</organismsDiffer>
    <experiments>6</experiments>
</comment>
<comment type="interaction">
    <interactant intactId="EBI-745213">
        <id>P29972</id>
    </interactant>
    <interactant intactId="EBI-741602">
        <id>O94972</id>
        <label>TRIM37</label>
    </interactant>
    <organismsDiffer>false</organismsDiffer>
    <experiments>3</experiments>
</comment>
<comment type="interaction">
    <interactant intactId="EBI-745213">
        <id>P29972</id>
    </interactant>
    <interactant intactId="EBI-725997">
        <id>Q8WV44</id>
        <label>TRIM41</label>
    </interactant>
    <organismsDiffer>false</organismsDiffer>
    <experiments>3</experiments>
</comment>
<comment type="interaction">
    <interactant intactId="EBI-745213">
        <id>P29972</id>
    </interactant>
    <interactant intactId="EBI-5235829">
        <id>Q8IWZ5</id>
        <label>TRIM42</label>
    </interactant>
    <organismsDiffer>false</organismsDiffer>
    <experiments>3</experiments>
</comment>
<comment type="interaction">
    <interactant intactId="EBI-745213">
        <id>P29972</id>
    </interactant>
    <interactant intactId="EBI-2813981">
        <id>Q9C029</id>
        <label>TRIM7</label>
    </interactant>
    <organismsDiffer>false</organismsDiffer>
    <experiments>3</experiments>
</comment>
<comment type="interaction">
    <interactant intactId="EBI-745213">
        <id>P29972</id>
    </interactant>
    <interactant intactId="EBI-742327">
        <id>Q15654</id>
        <label>TRIP6</label>
    </interactant>
    <organismsDiffer>false</organismsDiffer>
    <experiments>7</experiments>
</comment>
<comment type="interaction">
    <interactant intactId="EBI-745213">
        <id>P29972</id>
    </interactant>
    <interactant intactId="EBI-12806590">
        <id>Q86WV8</id>
        <label>TSC1</label>
    </interactant>
    <organismsDiffer>false</organismsDiffer>
    <experiments>3</experiments>
</comment>
<comment type="interaction">
    <interactant intactId="EBI-745213">
        <id>P29972</id>
    </interactant>
    <interactant intactId="EBI-9995672">
        <id>O15060</id>
        <label>ZBTB39</label>
    </interactant>
    <organismsDiffer>false</organismsDiffer>
    <experiments>3</experiments>
</comment>
<comment type="interaction">
    <interactant intactId="EBI-745213">
        <id>P29972</id>
    </interactant>
    <interactant intactId="EBI-11962760">
        <id>Q9NZV7</id>
        <label>ZIM2</label>
    </interactant>
    <organismsDiffer>false</organismsDiffer>
    <experiments>3</experiments>
</comment>
<comment type="interaction">
    <interactant intactId="EBI-745213">
        <id>P29972</id>
    </interactant>
    <interactant intactId="EBI-3921553">
        <id>P17020</id>
        <label>ZNF16</label>
    </interactant>
    <organismsDiffer>false</organismsDiffer>
    <experiments>3</experiments>
</comment>
<comment type="interaction">
    <interactant intactId="EBI-745213">
        <id>P29972</id>
    </interactant>
    <interactant intactId="EBI-8643207">
        <id>Q8TD17</id>
        <label>ZNF398</label>
    </interactant>
    <organismsDiffer>false</organismsDiffer>
    <experiments>3</experiments>
</comment>
<comment type="interaction">
    <interactant intactId="EBI-745213">
        <id>P29972</id>
    </interactant>
    <interactant intactId="EBI-10240849">
        <id>Q3KQV3</id>
        <label>ZNF792</label>
    </interactant>
    <organismsDiffer>false</organismsDiffer>
    <experiments>3</experiments>
</comment>
<comment type="subcellular location">
    <subcellularLocation>
        <location evidence="9">Cell membrane</location>
        <topology evidence="13">Multi-pass membrane protein</topology>
    </subcellularLocation>
</comment>
<comment type="alternative products">
    <event type="alternative splicing"/>
    <isoform>
        <id>P29972-1</id>
        <name>1</name>
        <sequence type="displayed"/>
    </isoform>
    <isoform>
        <id>P29972-2</id>
        <name>2</name>
        <sequence type="described" ref="VSP_046109 VSP_046110"/>
    </isoform>
    <isoform>
        <id>P29972-3</id>
        <name>3</name>
        <sequence type="described" ref="VSP_046679"/>
    </isoform>
    <isoform>
        <id>P29972-4</id>
        <name>4</name>
        <sequence type="described" ref="VSP_046680 VSP_046681"/>
    </isoform>
</comment>
<comment type="tissue specificity">
    <text evidence="9">Detected in erythrocytes (at protein level). Expressed in a number of tissues including erythrocytes, renal tubules, retinal pigment epithelium, heart, lung, skeletal muscle, kidney and pancreas. Weakly expressed in brain, placenta and liver.</text>
</comment>
<comment type="domain">
    <text evidence="20">Aquaporins contain two tandem repeats each containing three membrane-spanning domains and a pore-forming loop with the signature motif Asn-Pro-Ala (NPA).</text>
</comment>
<comment type="polymorphism">
    <text evidence="14 15">AQP1 is responsible for the Colton blood group system [MIM:110450]. Approximately 92% of Caucasians are Co(A+B-) (Ala-45), approximately 8% are Co(A+B+), and only 0.2% are Co(A-B+) (Val-45). Co(A-B-) which is very rare, is due to a complete absence of AQP1.</text>
</comment>
<comment type="similarity">
    <text evidence="23">Belongs to the MIP/aquaporin (TC 1.A.8) family.</text>
</comment>
<comment type="online information" name="Protein Spotlight">
    <link uri="https://www.proteinspotlight.org/back_issues/036"/>
    <text>Liquid states - Issue 36 of July 2003</text>
</comment>
<proteinExistence type="evidence at protein level"/>
<protein>
    <recommendedName>
        <fullName evidence="23">Aquaporin-1</fullName>
        <shortName>AQP-1</shortName>
    </recommendedName>
    <alternativeName>
        <fullName>Aquaporin-CHIP</fullName>
    </alternativeName>
    <alternativeName>
        <fullName evidence="22">Channel-like integral membrane protein of 28 kDa</fullName>
    </alternativeName>
    <alternativeName>
        <fullName>Urine water channel</fullName>
    </alternativeName>
</protein>